<dbReference type="EC" id="2.7.1.1" evidence="8"/>
<dbReference type="EMBL" id="M75126">
    <property type="protein sequence ID" value="AAA52646.1"/>
    <property type="molecule type" value="mRNA"/>
</dbReference>
<dbReference type="EMBL" id="AF016365">
    <property type="protein sequence ID" value="AAC15862.1"/>
    <property type="molecule type" value="Genomic_DNA"/>
</dbReference>
<dbReference type="EMBL" id="AF016349">
    <property type="protein sequence ID" value="AAC15862.1"/>
    <property type="status" value="JOINED"/>
    <property type="molecule type" value="Genomic_DNA"/>
</dbReference>
<dbReference type="EMBL" id="AF016351">
    <property type="protein sequence ID" value="AAC15862.1"/>
    <property type="status" value="JOINED"/>
    <property type="molecule type" value="Genomic_DNA"/>
</dbReference>
<dbReference type="EMBL" id="AF016352">
    <property type="protein sequence ID" value="AAC15862.1"/>
    <property type="status" value="JOINED"/>
    <property type="molecule type" value="Genomic_DNA"/>
</dbReference>
<dbReference type="EMBL" id="AF016353">
    <property type="protein sequence ID" value="AAC15862.1"/>
    <property type="status" value="JOINED"/>
    <property type="molecule type" value="Genomic_DNA"/>
</dbReference>
<dbReference type="EMBL" id="AF016354">
    <property type="protein sequence ID" value="AAC15862.1"/>
    <property type="status" value="JOINED"/>
    <property type="molecule type" value="Genomic_DNA"/>
</dbReference>
<dbReference type="EMBL" id="AF016355">
    <property type="protein sequence ID" value="AAC15862.1"/>
    <property type="status" value="JOINED"/>
    <property type="molecule type" value="Genomic_DNA"/>
</dbReference>
<dbReference type="EMBL" id="AF016356">
    <property type="protein sequence ID" value="AAC15862.1"/>
    <property type="status" value="JOINED"/>
    <property type="molecule type" value="Genomic_DNA"/>
</dbReference>
<dbReference type="EMBL" id="AF016357">
    <property type="protein sequence ID" value="AAC15862.1"/>
    <property type="status" value="JOINED"/>
    <property type="molecule type" value="Genomic_DNA"/>
</dbReference>
<dbReference type="EMBL" id="AF016358">
    <property type="protein sequence ID" value="AAC15862.1"/>
    <property type="status" value="JOINED"/>
    <property type="molecule type" value="Genomic_DNA"/>
</dbReference>
<dbReference type="EMBL" id="AF016359">
    <property type="protein sequence ID" value="AAC15862.1"/>
    <property type="status" value="JOINED"/>
    <property type="molecule type" value="Genomic_DNA"/>
</dbReference>
<dbReference type="EMBL" id="AF016360">
    <property type="protein sequence ID" value="AAC15862.1"/>
    <property type="status" value="JOINED"/>
    <property type="molecule type" value="Genomic_DNA"/>
</dbReference>
<dbReference type="EMBL" id="AF016361">
    <property type="protein sequence ID" value="AAC15862.1"/>
    <property type="status" value="JOINED"/>
    <property type="molecule type" value="Genomic_DNA"/>
</dbReference>
<dbReference type="EMBL" id="AF016362">
    <property type="protein sequence ID" value="AAC15862.1"/>
    <property type="status" value="JOINED"/>
    <property type="molecule type" value="Genomic_DNA"/>
</dbReference>
<dbReference type="EMBL" id="AF016363">
    <property type="protein sequence ID" value="AAC15862.1"/>
    <property type="status" value="JOINED"/>
    <property type="molecule type" value="Genomic_DNA"/>
</dbReference>
<dbReference type="EMBL" id="AF016364">
    <property type="protein sequence ID" value="AAC15862.1"/>
    <property type="status" value="JOINED"/>
    <property type="molecule type" value="Genomic_DNA"/>
</dbReference>
<dbReference type="EMBL" id="AF016365">
    <property type="protein sequence ID" value="AAC15863.1"/>
    <property type="molecule type" value="Genomic_DNA"/>
</dbReference>
<dbReference type="EMBL" id="AF016349">
    <property type="protein sequence ID" value="AAC15863.1"/>
    <property type="status" value="JOINED"/>
    <property type="molecule type" value="Genomic_DNA"/>
</dbReference>
<dbReference type="EMBL" id="AF016351">
    <property type="protein sequence ID" value="AAC15863.1"/>
    <property type="status" value="JOINED"/>
    <property type="molecule type" value="Genomic_DNA"/>
</dbReference>
<dbReference type="EMBL" id="AF016352">
    <property type="protein sequence ID" value="AAC15863.1"/>
    <property type="status" value="JOINED"/>
    <property type="molecule type" value="Genomic_DNA"/>
</dbReference>
<dbReference type="EMBL" id="AF016353">
    <property type="protein sequence ID" value="AAC15863.1"/>
    <property type="status" value="JOINED"/>
    <property type="molecule type" value="Genomic_DNA"/>
</dbReference>
<dbReference type="EMBL" id="AF016354">
    <property type="protein sequence ID" value="AAC15863.1"/>
    <property type="status" value="JOINED"/>
    <property type="molecule type" value="Genomic_DNA"/>
</dbReference>
<dbReference type="EMBL" id="AF016355">
    <property type="protein sequence ID" value="AAC15863.1"/>
    <property type="status" value="JOINED"/>
    <property type="molecule type" value="Genomic_DNA"/>
</dbReference>
<dbReference type="EMBL" id="AF016356">
    <property type="protein sequence ID" value="AAC15863.1"/>
    <property type="status" value="JOINED"/>
    <property type="molecule type" value="Genomic_DNA"/>
</dbReference>
<dbReference type="EMBL" id="AF016357">
    <property type="protein sequence ID" value="AAC15863.1"/>
    <property type="status" value="JOINED"/>
    <property type="molecule type" value="Genomic_DNA"/>
</dbReference>
<dbReference type="EMBL" id="AF016358">
    <property type="protein sequence ID" value="AAC15863.1"/>
    <property type="status" value="JOINED"/>
    <property type="molecule type" value="Genomic_DNA"/>
</dbReference>
<dbReference type="EMBL" id="AF016359">
    <property type="protein sequence ID" value="AAC15863.1"/>
    <property type="status" value="JOINED"/>
    <property type="molecule type" value="Genomic_DNA"/>
</dbReference>
<dbReference type="EMBL" id="AF016360">
    <property type="protein sequence ID" value="AAC15863.1"/>
    <property type="status" value="JOINED"/>
    <property type="molecule type" value="Genomic_DNA"/>
</dbReference>
<dbReference type="EMBL" id="AF016361">
    <property type="protein sequence ID" value="AAC15863.1"/>
    <property type="status" value="JOINED"/>
    <property type="molecule type" value="Genomic_DNA"/>
</dbReference>
<dbReference type="EMBL" id="AF016362">
    <property type="protein sequence ID" value="AAC15863.1"/>
    <property type="status" value="JOINED"/>
    <property type="molecule type" value="Genomic_DNA"/>
</dbReference>
<dbReference type="EMBL" id="AF016363">
    <property type="protein sequence ID" value="AAC15863.1"/>
    <property type="status" value="JOINED"/>
    <property type="molecule type" value="Genomic_DNA"/>
</dbReference>
<dbReference type="EMBL" id="AF016364">
    <property type="protein sequence ID" value="AAC15863.1"/>
    <property type="status" value="JOINED"/>
    <property type="molecule type" value="Genomic_DNA"/>
</dbReference>
<dbReference type="EMBL" id="AF016365">
    <property type="protein sequence ID" value="AAF82319.1"/>
    <property type="molecule type" value="Genomic_DNA"/>
</dbReference>
<dbReference type="EMBL" id="AF163910">
    <property type="protein sequence ID" value="AAF82319.1"/>
    <property type="status" value="JOINED"/>
    <property type="molecule type" value="Genomic_DNA"/>
</dbReference>
<dbReference type="EMBL" id="AF163911">
    <property type="protein sequence ID" value="AAF82319.1"/>
    <property type="status" value="JOINED"/>
    <property type="molecule type" value="Genomic_DNA"/>
</dbReference>
<dbReference type="EMBL" id="AF016351">
    <property type="protein sequence ID" value="AAF82319.1"/>
    <property type="status" value="JOINED"/>
    <property type="molecule type" value="Genomic_DNA"/>
</dbReference>
<dbReference type="EMBL" id="AF016352">
    <property type="protein sequence ID" value="AAF82319.1"/>
    <property type="status" value="JOINED"/>
    <property type="molecule type" value="Genomic_DNA"/>
</dbReference>
<dbReference type="EMBL" id="AF016353">
    <property type="protein sequence ID" value="AAF82319.1"/>
    <property type="status" value="JOINED"/>
    <property type="molecule type" value="Genomic_DNA"/>
</dbReference>
<dbReference type="EMBL" id="AF016354">
    <property type="protein sequence ID" value="AAF82319.1"/>
    <property type="status" value="JOINED"/>
    <property type="molecule type" value="Genomic_DNA"/>
</dbReference>
<dbReference type="EMBL" id="AF016355">
    <property type="protein sequence ID" value="AAF82319.1"/>
    <property type="status" value="JOINED"/>
    <property type="molecule type" value="Genomic_DNA"/>
</dbReference>
<dbReference type="EMBL" id="AF016356">
    <property type="protein sequence ID" value="AAF82319.1"/>
    <property type="status" value="JOINED"/>
    <property type="molecule type" value="Genomic_DNA"/>
</dbReference>
<dbReference type="EMBL" id="AF016357">
    <property type="protein sequence ID" value="AAF82319.1"/>
    <property type="status" value="JOINED"/>
    <property type="molecule type" value="Genomic_DNA"/>
</dbReference>
<dbReference type="EMBL" id="AF016358">
    <property type="protein sequence ID" value="AAF82319.1"/>
    <property type="status" value="JOINED"/>
    <property type="molecule type" value="Genomic_DNA"/>
</dbReference>
<dbReference type="EMBL" id="AF016359">
    <property type="protein sequence ID" value="AAF82319.1"/>
    <property type="status" value="JOINED"/>
    <property type="molecule type" value="Genomic_DNA"/>
</dbReference>
<dbReference type="EMBL" id="AF016360">
    <property type="protein sequence ID" value="AAF82319.1"/>
    <property type="status" value="JOINED"/>
    <property type="molecule type" value="Genomic_DNA"/>
</dbReference>
<dbReference type="EMBL" id="AF016361">
    <property type="protein sequence ID" value="AAF82319.1"/>
    <property type="status" value="JOINED"/>
    <property type="molecule type" value="Genomic_DNA"/>
</dbReference>
<dbReference type="EMBL" id="AF016362">
    <property type="protein sequence ID" value="AAF82319.1"/>
    <property type="status" value="JOINED"/>
    <property type="molecule type" value="Genomic_DNA"/>
</dbReference>
<dbReference type="EMBL" id="AF016363">
    <property type="protein sequence ID" value="AAF82319.1"/>
    <property type="status" value="JOINED"/>
    <property type="molecule type" value="Genomic_DNA"/>
</dbReference>
<dbReference type="EMBL" id="AF016364">
    <property type="protein sequence ID" value="AAF82319.1"/>
    <property type="status" value="JOINED"/>
    <property type="molecule type" value="Genomic_DNA"/>
</dbReference>
<dbReference type="EMBL" id="AF016365">
    <property type="protein sequence ID" value="AAF82320.1"/>
    <property type="molecule type" value="Genomic_DNA"/>
</dbReference>
<dbReference type="EMBL" id="AF163912">
    <property type="protein sequence ID" value="AAF82320.1"/>
    <property type="status" value="JOINED"/>
    <property type="molecule type" value="Genomic_DNA"/>
</dbReference>
<dbReference type="EMBL" id="AF016351">
    <property type="protein sequence ID" value="AAF82320.1"/>
    <property type="status" value="JOINED"/>
    <property type="molecule type" value="Genomic_DNA"/>
</dbReference>
<dbReference type="EMBL" id="AF016352">
    <property type="protein sequence ID" value="AAF82320.1"/>
    <property type="status" value="JOINED"/>
    <property type="molecule type" value="Genomic_DNA"/>
</dbReference>
<dbReference type="EMBL" id="AF016353">
    <property type="protein sequence ID" value="AAF82320.1"/>
    <property type="status" value="JOINED"/>
    <property type="molecule type" value="Genomic_DNA"/>
</dbReference>
<dbReference type="EMBL" id="AF016354">
    <property type="protein sequence ID" value="AAF82320.1"/>
    <property type="status" value="JOINED"/>
    <property type="molecule type" value="Genomic_DNA"/>
</dbReference>
<dbReference type="EMBL" id="AF016355">
    <property type="protein sequence ID" value="AAF82320.1"/>
    <property type="status" value="JOINED"/>
    <property type="molecule type" value="Genomic_DNA"/>
</dbReference>
<dbReference type="EMBL" id="AF016356">
    <property type="protein sequence ID" value="AAF82320.1"/>
    <property type="status" value="JOINED"/>
    <property type="molecule type" value="Genomic_DNA"/>
</dbReference>
<dbReference type="EMBL" id="AF016357">
    <property type="protein sequence ID" value="AAF82320.1"/>
    <property type="status" value="JOINED"/>
    <property type="molecule type" value="Genomic_DNA"/>
</dbReference>
<dbReference type="EMBL" id="AF016358">
    <property type="protein sequence ID" value="AAF82320.1"/>
    <property type="status" value="JOINED"/>
    <property type="molecule type" value="Genomic_DNA"/>
</dbReference>
<dbReference type="EMBL" id="AF016359">
    <property type="protein sequence ID" value="AAF82320.1"/>
    <property type="status" value="JOINED"/>
    <property type="molecule type" value="Genomic_DNA"/>
</dbReference>
<dbReference type="EMBL" id="AF016360">
    <property type="protein sequence ID" value="AAF82320.1"/>
    <property type="status" value="JOINED"/>
    <property type="molecule type" value="Genomic_DNA"/>
</dbReference>
<dbReference type="EMBL" id="AF016361">
    <property type="protein sequence ID" value="AAF82320.1"/>
    <property type="status" value="JOINED"/>
    <property type="molecule type" value="Genomic_DNA"/>
</dbReference>
<dbReference type="EMBL" id="AF016362">
    <property type="protein sequence ID" value="AAF82320.1"/>
    <property type="status" value="JOINED"/>
    <property type="molecule type" value="Genomic_DNA"/>
</dbReference>
<dbReference type="EMBL" id="AF016363">
    <property type="protein sequence ID" value="AAF82320.1"/>
    <property type="status" value="JOINED"/>
    <property type="molecule type" value="Genomic_DNA"/>
</dbReference>
<dbReference type="EMBL" id="AF016364">
    <property type="protein sequence ID" value="AAF82320.1"/>
    <property type="status" value="JOINED"/>
    <property type="molecule type" value="Genomic_DNA"/>
</dbReference>
<dbReference type="EMBL" id="AC016821">
    <property type="status" value="NOT_ANNOTATED_CDS"/>
    <property type="molecule type" value="Genomic_DNA"/>
</dbReference>
<dbReference type="EMBL" id="AL596223">
    <property type="status" value="NOT_ANNOTATED_CDS"/>
    <property type="molecule type" value="Genomic_DNA"/>
</dbReference>
<dbReference type="EMBL" id="AL672126">
    <property type="status" value="NOT_ANNOTATED_CDS"/>
    <property type="molecule type" value="Genomic_DNA"/>
</dbReference>
<dbReference type="EMBL" id="BC008730">
    <property type="protein sequence ID" value="AAH08730.1"/>
    <property type="molecule type" value="mRNA"/>
</dbReference>
<dbReference type="EMBL" id="AF073786">
    <property type="protein sequence ID" value="AAC25424.1"/>
    <property type="molecule type" value="mRNA"/>
</dbReference>
<dbReference type="EMBL" id="AF029306">
    <property type="protein sequence ID" value="AAC00172.1"/>
    <property type="molecule type" value="Genomic_DNA"/>
</dbReference>
<dbReference type="EMBL" id="X66957">
    <property type="protein sequence ID" value="CAA47379.1"/>
    <property type="molecule type" value="mRNA"/>
</dbReference>
<dbReference type="CCDS" id="CCDS7289.1">
    <molecule id="P19367-3"/>
</dbReference>
<dbReference type="CCDS" id="CCDS7291.1">
    <molecule id="P19367-2"/>
</dbReference>
<dbReference type="CCDS" id="CCDS7292.1">
    <molecule id="P19367-1"/>
</dbReference>
<dbReference type="PIR" id="A31869">
    <property type="entry name" value="A31869"/>
</dbReference>
<dbReference type="RefSeq" id="NP_000179.2">
    <molecule id="P19367-1"/>
    <property type="nucleotide sequence ID" value="NM_000188.3"/>
</dbReference>
<dbReference type="RefSeq" id="NP_001309293.1">
    <molecule id="P19367-3"/>
    <property type="nucleotide sequence ID" value="NM_001322364.2"/>
</dbReference>
<dbReference type="RefSeq" id="NP_001345192.1">
    <molecule id="P19367-3"/>
    <property type="nucleotide sequence ID" value="NM_001358263.1"/>
</dbReference>
<dbReference type="RefSeq" id="NP_277031.1">
    <molecule id="P19367-2"/>
    <property type="nucleotide sequence ID" value="NM_033496.3"/>
</dbReference>
<dbReference type="RefSeq" id="NP_277032.1">
    <molecule id="P19367-3"/>
    <property type="nucleotide sequence ID" value="NM_033497.3"/>
</dbReference>
<dbReference type="RefSeq" id="NP_277033.1">
    <molecule id="P19367-3"/>
    <property type="nucleotide sequence ID" value="NM_033498.3"/>
</dbReference>
<dbReference type="RefSeq" id="NP_277035.2">
    <molecule id="P19367-4"/>
    <property type="nucleotide sequence ID" value="NM_033500.2"/>
</dbReference>
<dbReference type="RefSeq" id="XP_011538034.1">
    <property type="nucleotide sequence ID" value="XM_011539732.1"/>
</dbReference>
<dbReference type="RefSeq" id="XP_024303737.1">
    <molecule id="P19367-3"/>
    <property type="nucleotide sequence ID" value="XM_024447969.2"/>
</dbReference>
<dbReference type="RefSeq" id="XP_047281092.1">
    <molecule id="P19367-3"/>
    <property type="nucleotide sequence ID" value="XM_047425136.1"/>
</dbReference>
<dbReference type="RefSeq" id="XP_047281093.1">
    <molecule id="P19367-3"/>
    <property type="nucleotide sequence ID" value="XM_047425137.1"/>
</dbReference>
<dbReference type="RefSeq" id="XP_054221661.1">
    <molecule id="P19367-3"/>
    <property type="nucleotide sequence ID" value="XM_054365686.1"/>
</dbReference>
<dbReference type="RefSeq" id="XP_054221662.1">
    <molecule id="P19367-3"/>
    <property type="nucleotide sequence ID" value="XM_054365687.1"/>
</dbReference>
<dbReference type="RefSeq" id="XP_054221663.1">
    <molecule id="P19367-3"/>
    <property type="nucleotide sequence ID" value="XM_054365688.1"/>
</dbReference>
<dbReference type="PDB" id="1CZA">
    <property type="method" value="X-ray"/>
    <property type="resolution" value="1.90 A"/>
    <property type="chains" value="N=1-917"/>
</dbReference>
<dbReference type="PDB" id="1DGK">
    <property type="method" value="X-ray"/>
    <property type="resolution" value="2.80 A"/>
    <property type="chains" value="N=1-917"/>
</dbReference>
<dbReference type="PDB" id="1HKB">
    <property type="method" value="X-ray"/>
    <property type="resolution" value="2.80 A"/>
    <property type="chains" value="A/B=1-917"/>
</dbReference>
<dbReference type="PDB" id="1HKC">
    <property type="method" value="X-ray"/>
    <property type="resolution" value="2.80 A"/>
    <property type="chains" value="A=1-917"/>
</dbReference>
<dbReference type="PDB" id="1QHA">
    <property type="method" value="X-ray"/>
    <property type="resolution" value="2.25 A"/>
    <property type="chains" value="A/B=1-917"/>
</dbReference>
<dbReference type="PDB" id="4F9O">
    <property type="method" value="X-ray"/>
    <property type="resolution" value="2.65 A"/>
    <property type="chains" value="A/B=1-914"/>
</dbReference>
<dbReference type="PDB" id="4FOE">
    <property type="method" value="X-ray"/>
    <property type="resolution" value="2.70 A"/>
    <property type="chains" value="A/B=1-917"/>
</dbReference>
<dbReference type="PDB" id="4FOI">
    <property type="method" value="X-ray"/>
    <property type="resolution" value="2.40 A"/>
    <property type="chains" value="A/B=1-917"/>
</dbReference>
<dbReference type="PDB" id="4FPA">
    <property type="method" value="X-ray"/>
    <property type="resolution" value="2.48 A"/>
    <property type="chains" value="A/B=1-917"/>
</dbReference>
<dbReference type="PDB" id="4FPB">
    <property type="method" value="X-ray"/>
    <property type="resolution" value="3.00 A"/>
    <property type="chains" value="A/B=1-917"/>
</dbReference>
<dbReference type="PDBsum" id="1CZA"/>
<dbReference type="PDBsum" id="1DGK"/>
<dbReference type="PDBsum" id="1HKB"/>
<dbReference type="PDBsum" id="1HKC"/>
<dbReference type="PDBsum" id="1QHA"/>
<dbReference type="PDBsum" id="4F9O"/>
<dbReference type="PDBsum" id="4FOE"/>
<dbReference type="PDBsum" id="4FOI"/>
<dbReference type="PDBsum" id="4FPA"/>
<dbReference type="PDBsum" id="4FPB"/>
<dbReference type="SMR" id="P19367"/>
<dbReference type="BioGRID" id="109345">
    <property type="interactions" value="229"/>
</dbReference>
<dbReference type="CORUM" id="P19367"/>
<dbReference type="DIP" id="DIP-56245N"/>
<dbReference type="FunCoup" id="P19367">
    <property type="interactions" value="1667"/>
</dbReference>
<dbReference type="IntAct" id="P19367">
    <property type="interactions" value="82"/>
</dbReference>
<dbReference type="MINT" id="P19367"/>
<dbReference type="STRING" id="9606.ENSP00000494664"/>
<dbReference type="BindingDB" id="P19367"/>
<dbReference type="ChEMBL" id="CHEMBL2688"/>
<dbReference type="DrugBank" id="DB02007">
    <property type="generic name" value="alpha-D-glucose 6-phosphate"/>
</dbReference>
<dbReference type="DrugBank" id="DB02379">
    <property type="generic name" value="Beta-D-Glucose"/>
</dbReference>
<dbReference type="DrugBank" id="DB01914">
    <property type="generic name" value="D-glucose"/>
</dbReference>
<dbReference type="DrugBank" id="DB09341">
    <property type="generic name" value="Dextrose, unspecified form"/>
</dbReference>
<dbReference type="DrugBank" id="DB09502">
    <property type="generic name" value="Fludeoxyglucose (18F)"/>
</dbReference>
<dbReference type="DrugBank" id="DB06266">
    <property type="generic name" value="Lonidamine"/>
</dbReference>
<dbReference type="DrugBank" id="DB04395">
    <property type="generic name" value="Phosphoaminophosphonic Acid-Adenylate Ester"/>
</dbReference>
<dbReference type="CarbonylDB" id="P19367"/>
<dbReference type="GlyGen" id="P19367">
    <property type="glycosylation" value="2 sites, 1 N-linked glycan (1 site), 1 O-linked glycan (1 site)"/>
</dbReference>
<dbReference type="iPTMnet" id="P19367"/>
<dbReference type="MetOSite" id="P19367"/>
<dbReference type="PhosphoSitePlus" id="P19367"/>
<dbReference type="SwissPalm" id="P19367"/>
<dbReference type="BioMuta" id="HK1"/>
<dbReference type="DMDM" id="116242516"/>
<dbReference type="CPTAC" id="CPTAC-80"/>
<dbReference type="CPTAC" id="CPTAC-81"/>
<dbReference type="jPOST" id="P19367"/>
<dbReference type="MassIVE" id="P19367"/>
<dbReference type="PaxDb" id="9606-ENSP00000402103"/>
<dbReference type="PeptideAtlas" id="P19367"/>
<dbReference type="PRIDE" id="P19367"/>
<dbReference type="ProteomicsDB" id="53648">
    <molecule id="P19367-1"/>
</dbReference>
<dbReference type="ProteomicsDB" id="53649">
    <molecule id="P19367-2"/>
</dbReference>
<dbReference type="ProteomicsDB" id="53650">
    <molecule id="P19367-3"/>
</dbReference>
<dbReference type="ProteomicsDB" id="53651">
    <molecule id="P19367-4"/>
</dbReference>
<dbReference type="Pumba" id="P19367"/>
<dbReference type="Antibodypedia" id="2057">
    <property type="antibodies" value="870 antibodies from 42 providers"/>
</dbReference>
<dbReference type="DNASU" id="3098"/>
<dbReference type="Ensembl" id="ENST00000298649.8">
    <molecule id="P19367-2"/>
    <property type="protein sequence ID" value="ENSP00000298649.3"/>
    <property type="gene ID" value="ENSG00000156515.25"/>
</dbReference>
<dbReference type="Ensembl" id="ENST00000359426.7">
    <molecule id="P19367-1"/>
    <property type="protein sequence ID" value="ENSP00000352398.6"/>
    <property type="gene ID" value="ENSG00000156515.25"/>
</dbReference>
<dbReference type="Ensembl" id="ENST00000436817.6">
    <molecule id="P19367-3"/>
    <property type="protein sequence ID" value="ENSP00000415949.2"/>
    <property type="gene ID" value="ENSG00000156515.25"/>
</dbReference>
<dbReference type="Ensembl" id="ENST00000643399.2">
    <molecule id="P19367-3"/>
    <property type="protein sequence ID" value="ENSP00000494664.1"/>
    <property type="gene ID" value="ENSG00000156515.25"/>
</dbReference>
<dbReference type="GeneID" id="3098"/>
<dbReference type="KEGG" id="hsa:3098"/>
<dbReference type="MANE-Select" id="ENST00000359426.7">
    <property type="protein sequence ID" value="ENSP00000352398.6"/>
    <property type="RefSeq nucleotide sequence ID" value="NM_000188.3"/>
    <property type="RefSeq protein sequence ID" value="NP_000179.2"/>
</dbReference>
<dbReference type="UCSC" id="uc001jpg.5">
    <molecule id="P19367-1"/>
    <property type="organism name" value="human"/>
</dbReference>
<dbReference type="AGR" id="HGNC:4922"/>
<dbReference type="CTD" id="3098"/>
<dbReference type="DisGeNET" id="3098"/>
<dbReference type="GeneCards" id="HK1"/>
<dbReference type="HGNC" id="HGNC:4922">
    <property type="gene designation" value="HK1"/>
</dbReference>
<dbReference type="HPA" id="ENSG00000156515">
    <property type="expression patterns" value="Low tissue specificity"/>
</dbReference>
<dbReference type="MalaCards" id="HK1"/>
<dbReference type="MIM" id="142600">
    <property type="type" value="gene"/>
</dbReference>
<dbReference type="MIM" id="235700">
    <property type="type" value="phenotype"/>
</dbReference>
<dbReference type="MIM" id="605285">
    <property type="type" value="phenotype"/>
</dbReference>
<dbReference type="MIM" id="617460">
    <property type="type" value="phenotype"/>
</dbReference>
<dbReference type="MIM" id="618547">
    <property type="type" value="phenotype"/>
</dbReference>
<dbReference type="neXtProt" id="NX_P19367"/>
<dbReference type="OpenTargets" id="ENSG00000156515"/>
<dbReference type="Orphanet" id="99953">
    <property type="disease" value="Charcot-Marie-Tooth disease type 4G"/>
</dbReference>
<dbReference type="Orphanet" id="90031">
    <property type="disease" value="Non-spherocytic hemolytic anemia due to hexokinase deficiency"/>
</dbReference>
<dbReference type="PharmGKB" id="PA29300"/>
<dbReference type="VEuPathDB" id="HostDB:ENSG00000156515"/>
<dbReference type="eggNOG" id="KOG1369">
    <property type="taxonomic scope" value="Eukaryota"/>
</dbReference>
<dbReference type="GeneTree" id="ENSGT00950000182787"/>
<dbReference type="HOGENOM" id="CLU_014393_1_0_1"/>
<dbReference type="InParanoid" id="P19367"/>
<dbReference type="OMA" id="XGILITW"/>
<dbReference type="OrthoDB" id="419537at2759"/>
<dbReference type="PAN-GO" id="P19367">
    <property type="GO annotations" value="10 GO annotations based on evolutionary models"/>
</dbReference>
<dbReference type="PhylomeDB" id="P19367"/>
<dbReference type="TreeFam" id="TF314238"/>
<dbReference type="BioCyc" id="MetaCyc:HS08136-MONOMER"/>
<dbReference type="BRENDA" id="2.7.1.1">
    <property type="organism ID" value="2681"/>
</dbReference>
<dbReference type="PathwayCommons" id="P19367"/>
<dbReference type="Reactome" id="R-HSA-446205">
    <property type="pathway name" value="Synthesis of GDP-mannose"/>
</dbReference>
<dbReference type="Reactome" id="R-HSA-5619056">
    <property type="pathway name" value="Defective HK1 causes hexokinase deficiency (HK deficiency)"/>
</dbReference>
<dbReference type="Reactome" id="R-HSA-70171">
    <property type="pathway name" value="Glycolysis"/>
</dbReference>
<dbReference type="SABIO-RK" id="P19367"/>
<dbReference type="SignaLink" id="P19367"/>
<dbReference type="SIGNOR" id="P19367"/>
<dbReference type="UniPathway" id="UPA00109">
    <property type="reaction ID" value="UER00180"/>
</dbReference>
<dbReference type="UniPathway" id="UPA00242"/>
<dbReference type="BioGRID-ORCS" id="3098">
    <property type="hits" value="16 hits in 1175 CRISPR screens"/>
</dbReference>
<dbReference type="CD-CODE" id="FB4E32DD">
    <property type="entry name" value="Presynaptic clusters and postsynaptic densities"/>
</dbReference>
<dbReference type="ChiTaRS" id="HK1">
    <property type="organism name" value="human"/>
</dbReference>
<dbReference type="EvolutionaryTrace" id="P19367"/>
<dbReference type="GenomeRNAi" id="3098"/>
<dbReference type="Pharos" id="P19367">
    <property type="development level" value="Tchem"/>
</dbReference>
<dbReference type="PRO" id="PR:P19367"/>
<dbReference type="Proteomes" id="UP000005640">
    <property type="component" value="Chromosome 10"/>
</dbReference>
<dbReference type="RNAct" id="P19367">
    <property type="molecule type" value="protein"/>
</dbReference>
<dbReference type="Bgee" id="ENSG00000156515">
    <property type="expression patterns" value="Expressed in cerebellar vermis and 205 other cell types or tissues"/>
</dbReference>
<dbReference type="ExpressionAtlas" id="P19367">
    <property type="expression patterns" value="baseline and differential"/>
</dbReference>
<dbReference type="GO" id="GO:0005829">
    <property type="term" value="C:cytosol"/>
    <property type="evidence" value="ECO:0000318"/>
    <property type="project" value="GO_Central"/>
</dbReference>
<dbReference type="GO" id="GO:0045121">
    <property type="term" value="C:membrane raft"/>
    <property type="evidence" value="ECO:0007669"/>
    <property type="project" value="Ensembl"/>
</dbReference>
<dbReference type="GO" id="GO:0005741">
    <property type="term" value="C:mitochondrial outer membrane"/>
    <property type="evidence" value="ECO:0007669"/>
    <property type="project" value="UniProtKB-SubCell"/>
</dbReference>
<dbReference type="GO" id="GO:0005739">
    <property type="term" value="C:mitochondrion"/>
    <property type="evidence" value="ECO:0000314"/>
    <property type="project" value="HPA"/>
</dbReference>
<dbReference type="GO" id="GO:0005524">
    <property type="term" value="F:ATP binding"/>
    <property type="evidence" value="ECO:0007669"/>
    <property type="project" value="UniProtKB-KW"/>
</dbReference>
<dbReference type="GO" id="GO:0005536">
    <property type="term" value="F:D-glucose binding"/>
    <property type="evidence" value="ECO:0007669"/>
    <property type="project" value="InterPro"/>
</dbReference>
<dbReference type="GO" id="GO:0008865">
    <property type="term" value="F:fructokinase activity"/>
    <property type="evidence" value="ECO:0000250"/>
    <property type="project" value="UniProtKB"/>
</dbReference>
<dbReference type="GO" id="GO:0004340">
    <property type="term" value="F:glucokinase activity"/>
    <property type="evidence" value="ECO:0000250"/>
    <property type="project" value="UniProtKB"/>
</dbReference>
<dbReference type="GO" id="GO:0047931">
    <property type="term" value="F:glucosamine kinase activity"/>
    <property type="evidence" value="ECO:0007669"/>
    <property type="project" value="RHEA"/>
</dbReference>
<dbReference type="GO" id="GO:0004396">
    <property type="term" value="F:hexokinase activity"/>
    <property type="evidence" value="ECO:0000315"/>
    <property type="project" value="CAFA"/>
</dbReference>
<dbReference type="GO" id="GO:0019158">
    <property type="term" value="F:mannokinase activity"/>
    <property type="evidence" value="ECO:0000269"/>
    <property type="project" value="Reactome"/>
</dbReference>
<dbReference type="GO" id="GO:0042834">
    <property type="term" value="F:peptidoglycan binding"/>
    <property type="evidence" value="ECO:0000314"/>
    <property type="project" value="CAFA"/>
</dbReference>
<dbReference type="GO" id="GO:0061621">
    <property type="term" value="P:canonical glycolysis"/>
    <property type="evidence" value="ECO:0000304"/>
    <property type="project" value="Reactome"/>
</dbReference>
<dbReference type="GO" id="GO:0046835">
    <property type="term" value="P:carbohydrate phosphorylation"/>
    <property type="evidence" value="ECO:0000315"/>
    <property type="project" value="CAFA"/>
</dbReference>
<dbReference type="GO" id="GO:0072655">
    <property type="term" value="P:establishment of protein localization to mitochondrion"/>
    <property type="evidence" value="ECO:0000315"/>
    <property type="project" value="ParkinsonsUK-UCL"/>
</dbReference>
<dbReference type="GO" id="GO:0006002">
    <property type="term" value="P:fructose 6-phosphate metabolic process"/>
    <property type="evidence" value="ECO:0000250"/>
    <property type="project" value="UniProtKB"/>
</dbReference>
<dbReference type="GO" id="GO:0009298">
    <property type="term" value="P:GDP-mannose biosynthetic process"/>
    <property type="evidence" value="ECO:0000304"/>
    <property type="project" value="Reactome"/>
</dbReference>
<dbReference type="GO" id="GO:0061728">
    <property type="term" value="P:GDP-mannose biosynthetic process from mannose"/>
    <property type="evidence" value="ECO:0007669"/>
    <property type="project" value="Ensembl"/>
</dbReference>
<dbReference type="GO" id="GO:0051156">
    <property type="term" value="P:glucose 6-phosphate metabolic process"/>
    <property type="evidence" value="ECO:0000250"/>
    <property type="project" value="UniProtKB"/>
</dbReference>
<dbReference type="GO" id="GO:0006006">
    <property type="term" value="P:glucose metabolic process"/>
    <property type="evidence" value="ECO:0000318"/>
    <property type="project" value="GO_Central"/>
</dbReference>
<dbReference type="GO" id="GO:0006096">
    <property type="term" value="P:glycolytic process"/>
    <property type="evidence" value="ECO:0000318"/>
    <property type="project" value="GO_Central"/>
</dbReference>
<dbReference type="GO" id="GO:0006954">
    <property type="term" value="P:inflammatory response"/>
    <property type="evidence" value="ECO:0007669"/>
    <property type="project" value="UniProtKB-KW"/>
</dbReference>
<dbReference type="GO" id="GO:0045087">
    <property type="term" value="P:innate immune response"/>
    <property type="evidence" value="ECO:0007669"/>
    <property type="project" value="UniProtKB-KW"/>
</dbReference>
<dbReference type="GO" id="GO:0001678">
    <property type="term" value="P:intracellular glucose homeostasis"/>
    <property type="evidence" value="ECO:0000318"/>
    <property type="project" value="GO_Central"/>
</dbReference>
<dbReference type="GO" id="GO:0072656">
    <property type="term" value="P:maintenance of protein location in mitochondrion"/>
    <property type="evidence" value="ECO:0000315"/>
    <property type="project" value="ParkinsonsUK-UCL"/>
</dbReference>
<dbReference type="GO" id="GO:0006013">
    <property type="term" value="P:mannose metabolic process"/>
    <property type="evidence" value="ECO:0000250"/>
    <property type="project" value="UniProtKB"/>
</dbReference>
<dbReference type="GO" id="GO:0002720">
    <property type="term" value="P:positive regulation of cytokine production involved in immune response"/>
    <property type="evidence" value="ECO:0007669"/>
    <property type="project" value="Ensembl"/>
</dbReference>
<dbReference type="GO" id="GO:0032731">
    <property type="term" value="P:positive regulation of interleukin-1 beta production"/>
    <property type="evidence" value="ECO:0007669"/>
    <property type="project" value="Ensembl"/>
</dbReference>
<dbReference type="CDD" id="cd24124">
    <property type="entry name" value="ASKHA_NBD_HK1_meta_rpt1"/>
    <property type="match status" value="1"/>
</dbReference>
<dbReference type="CDD" id="cd24127">
    <property type="entry name" value="ASKHA_NBD_HK1_meta_rpt2"/>
    <property type="match status" value="1"/>
</dbReference>
<dbReference type="FunFam" id="3.30.420.40:FF:000015">
    <property type="entry name" value="Hexokinase 1"/>
    <property type="match status" value="1"/>
</dbReference>
<dbReference type="FunFam" id="3.40.367.20:FF:000001">
    <property type="entry name" value="Hexokinase 1"/>
    <property type="match status" value="1"/>
</dbReference>
<dbReference type="FunFam" id="3.30.420.40:FF:000555">
    <property type="entry name" value="Hexokinase-1"/>
    <property type="match status" value="1"/>
</dbReference>
<dbReference type="FunFam" id="3.40.367.20:FF:000020">
    <property type="entry name" value="Hexokinase-1"/>
    <property type="match status" value="1"/>
</dbReference>
<dbReference type="Gene3D" id="3.30.420.40">
    <property type="match status" value="2"/>
</dbReference>
<dbReference type="Gene3D" id="3.40.367.20">
    <property type="match status" value="2"/>
</dbReference>
<dbReference type="InterPro" id="IPR043129">
    <property type="entry name" value="ATPase_NBD"/>
</dbReference>
<dbReference type="InterPro" id="IPR001312">
    <property type="entry name" value="Hexokinase"/>
</dbReference>
<dbReference type="InterPro" id="IPR019807">
    <property type="entry name" value="Hexokinase_BS"/>
</dbReference>
<dbReference type="InterPro" id="IPR022673">
    <property type="entry name" value="Hexokinase_C"/>
</dbReference>
<dbReference type="InterPro" id="IPR022672">
    <property type="entry name" value="Hexokinase_N"/>
</dbReference>
<dbReference type="PANTHER" id="PTHR19443">
    <property type="entry name" value="HEXOKINASE"/>
    <property type="match status" value="1"/>
</dbReference>
<dbReference type="PANTHER" id="PTHR19443:SF10">
    <property type="entry name" value="HEXOKINASE-1"/>
    <property type="match status" value="1"/>
</dbReference>
<dbReference type="Pfam" id="PF00349">
    <property type="entry name" value="Hexokinase_1"/>
    <property type="match status" value="2"/>
</dbReference>
<dbReference type="Pfam" id="PF03727">
    <property type="entry name" value="Hexokinase_2"/>
    <property type="match status" value="2"/>
</dbReference>
<dbReference type="PRINTS" id="PR00475">
    <property type="entry name" value="HEXOKINASE"/>
</dbReference>
<dbReference type="SUPFAM" id="SSF53067">
    <property type="entry name" value="Actin-like ATPase domain"/>
    <property type="match status" value="4"/>
</dbReference>
<dbReference type="PROSITE" id="PS00378">
    <property type="entry name" value="HEXOKINASE_1"/>
    <property type="match status" value="2"/>
</dbReference>
<dbReference type="PROSITE" id="PS51748">
    <property type="entry name" value="HEXOKINASE_2"/>
    <property type="match status" value="2"/>
</dbReference>
<gene>
    <name evidence="31" type="primary">HK1</name>
</gene>
<name>HXK1_HUMAN</name>
<proteinExistence type="evidence at protein level"/>
<organism>
    <name type="scientific">Homo sapiens</name>
    <name type="common">Human</name>
    <dbReference type="NCBI Taxonomy" id="9606"/>
    <lineage>
        <taxon>Eukaryota</taxon>
        <taxon>Metazoa</taxon>
        <taxon>Chordata</taxon>
        <taxon>Craniata</taxon>
        <taxon>Vertebrata</taxon>
        <taxon>Euteleostomi</taxon>
        <taxon>Mammalia</taxon>
        <taxon>Eutheria</taxon>
        <taxon>Euarchontoglires</taxon>
        <taxon>Primates</taxon>
        <taxon>Haplorrhini</taxon>
        <taxon>Catarrhini</taxon>
        <taxon>Hominidae</taxon>
        <taxon>Homo</taxon>
    </lineage>
</organism>
<sequence length="917" mass="102486">MIAAQLLAYYFTELKDDQVKKIDKYLYAMRLSDETLIDIMTRFRKEMKNGLSRDFNPTATVKMLPTFVRSIPDGSEKGDFIALDLGGSSFRILRVQVNHEKNQNVHMESEVYDTPENIVHGSGSQLFDHVAECLGDFMEKRKIKDKKLPVGFTFSFPCQQSKIDEAILITWTKRFKASGVEGADVVKLLNKAIKKRGDYDANIVAVVNDTVGTMMTCGYDDQHCEVGLIIGTGTNACYMEELRHIDLVEGDEGRMCINTEWGAFGDDGSLEDIRTEFDREIDRGSLNPGKQLFEKMVSGMYLGELVRLILVKMAKEGLLFEGRITPELLTRGKFNTSDVSAIEKNKEGLHNAKEILTRLGVEPSDDDCVSVQHVCTIVSFRSANLVAATLGAILNRLRDNKGTPRLRTTVGVDGSLYKTHPQYSRRFHKTLRRLVPDSDVRFLLSESGSGKGAAMVTAVAYRLAEQHRQIEETLAHFHLTKDMLLEVKKRMRAEMELGLRKQTHNNAVVKMLPSFVRRTPDGTENGDFLALDLGGTNFRVLLVKIRSGKKRTVEMHNKIYAIPIEIMQGTGEELFDHIVSCISDFLDYMGIKGPRMPLGFTFSFPCQQTSLDAGILITWTKGFKATDCVGHDVVTLLRDAIKRREEFDLDVVAVVNDTVGTMMTCAYEEPTCEVGLIVGTGSNACYMEEMKNVEMVEGDQGQMCINMEWGAFGDNGCLDDIRTHYDRLVDEYSLNAGKQRYEKMISGMYLGEIVRNILIDFTKKGFLFRGQISETLKTRGIFETKFLSQIESDRLALLQVRAILQQLGLNSTCDDSILVKTVCGVVSRRAAQLCGAGMAAVVDKIRENRGLDRLNVTVGVDGTLYKLHPHFSRIMHQTVKELSPKCNVSFLLSEDGSGKGAALITAVGVRLRTEASS</sequence>
<keyword id="KW-0002">3D-structure</keyword>
<keyword id="KW-0007">Acetylation</keyword>
<keyword id="KW-0021">Allosteric enzyme</keyword>
<keyword id="KW-0025">Alternative splicing</keyword>
<keyword id="KW-0067">ATP-binding</keyword>
<keyword id="KW-0144">Charcot-Marie-Tooth disease</keyword>
<keyword id="KW-0963">Cytoplasm</keyword>
<keyword id="KW-0903">Direct protein sequencing</keyword>
<keyword id="KW-0225">Disease variant</keyword>
<keyword id="KW-0324">Glycolysis</keyword>
<keyword id="KW-0360">Hereditary hemolytic anemia</keyword>
<keyword id="KW-0391">Immunity</keyword>
<keyword id="KW-0395">Inflammatory response</keyword>
<keyword id="KW-0399">Innate immunity</keyword>
<keyword id="KW-0991">Intellectual disability</keyword>
<keyword id="KW-0418">Kinase</keyword>
<keyword id="KW-0472">Membrane</keyword>
<keyword id="KW-0496">Mitochondrion</keyword>
<keyword id="KW-1000">Mitochondrion outer membrane</keyword>
<keyword id="KW-0523">Neurodegeneration</keyword>
<keyword id="KW-0622">Neuropathy</keyword>
<keyword id="KW-0547">Nucleotide-binding</keyword>
<keyword id="KW-0597">Phosphoprotein</keyword>
<keyword id="KW-1267">Proteomics identification</keyword>
<keyword id="KW-1185">Reference proteome</keyword>
<keyword id="KW-0677">Repeat</keyword>
<keyword id="KW-0682">Retinitis pigmentosa</keyword>
<keyword id="KW-0808">Transferase</keyword>
<accession>P19367</accession>
<accession>E9PCK0</accession>
<accession>O43443</accession>
<accession>O43444</accession>
<accession>O75574</accession>
<accession>Q5VTC3</accession>
<accession>Q96HC8</accession>
<accession>Q9NNZ4</accession>
<accession>Q9NNZ5</accession>
<reference key="1">
    <citation type="journal article" date="1988" name="Biochem. Biophys. Res. Commun.">
        <title>Human hexokinase: sequences of amino- and carboxyl-terminal halves are homologous.</title>
        <authorList>
            <person name="Nishi S."/>
            <person name="Seino S."/>
            <person name="Bell G.I."/>
        </authorList>
    </citation>
    <scope>NUCLEOTIDE SEQUENCE [MRNA] (ISOFORM 1)</scope>
    <scope>VARIANT MET-776</scope>
</reference>
<reference key="2">
    <citation type="journal article" date="1998" name="Biochem. J.">
        <title>Structure of the human hexokinase type I gene and nucleotide sequence of the 5' flanking region.</title>
        <authorList>
            <person name="Ruzzo A."/>
            <person name="Andreoni F."/>
            <person name="Magnani M."/>
        </authorList>
    </citation>
    <scope>NUCLEOTIDE SEQUENCE [GENOMIC DNA]</scope>
    <scope>ALTERNATIVE SPLICING</scope>
</reference>
<reference key="3">
    <citation type="journal article" date="2004" name="Nature">
        <title>The DNA sequence and comparative analysis of human chromosome 10.</title>
        <authorList>
            <person name="Deloukas P."/>
            <person name="Earthrowl M.E."/>
            <person name="Grafham D.V."/>
            <person name="Rubenfield M."/>
            <person name="French L."/>
            <person name="Steward C.A."/>
            <person name="Sims S.K."/>
            <person name="Jones M.C."/>
            <person name="Searle S."/>
            <person name="Scott C."/>
            <person name="Howe K."/>
            <person name="Hunt S.E."/>
            <person name="Andrews T.D."/>
            <person name="Gilbert J.G.R."/>
            <person name="Swarbreck D."/>
            <person name="Ashurst J.L."/>
            <person name="Taylor A."/>
            <person name="Battles J."/>
            <person name="Bird C.P."/>
            <person name="Ainscough R."/>
            <person name="Almeida J.P."/>
            <person name="Ashwell R.I.S."/>
            <person name="Ambrose K.D."/>
            <person name="Babbage A.K."/>
            <person name="Bagguley C.L."/>
            <person name="Bailey J."/>
            <person name="Banerjee R."/>
            <person name="Bates K."/>
            <person name="Beasley H."/>
            <person name="Bray-Allen S."/>
            <person name="Brown A.J."/>
            <person name="Brown J.Y."/>
            <person name="Burford D.C."/>
            <person name="Burrill W."/>
            <person name="Burton J."/>
            <person name="Cahill P."/>
            <person name="Camire D."/>
            <person name="Carter N.P."/>
            <person name="Chapman J.C."/>
            <person name="Clark S.Y."/>
            <person name="Clarke G."/>
            <person name="Clee C.M."/>
            <person name="Clegg S."/>
            <person name="Corby N."/>
            <person name="Coulson A."/>
            <person name="Dhami P."/>
            <person name="Dutta I."/>
            <person name="Dunn M."/>
            <person name="Faulkner L."/>
            <person name="Frankish A."/>
            <person name="Frankland J.A."/>
            <person name="Garner P."/>
            <person name="Garnett J."/>
            <person name="Gribble S."/>
            <person name="Griffiths C."/>
            <person name="Grocock R."/>
            <person name="Gustafson E."/>
            <person name="Hammond S."/>
            <person name="Harley J.L."/>
            <person name="Hart E."/>
            <person name="Heath P.D."/>
            <person name="Ho T.P."/>
            <person name="Hopkins B."/>
            <person name="Horne J."/>
            <person name="Howden P.J."/>
            <person name="Huckle E."/>
            <person name="Hynds C."/>
            <person name="Johnson C."/>
            <person name="Johnson D."/>
            <person name="Kana A."/>
            <person name="Kay M."/>
            <person name="Kimberley A.M."/>
            <person name="Kershaw J.K."/>
            <person name="Kokkinaki M."/>
            <person name="Laird G.K."/>
            <person name="Lawlor S."/>
            <person name="Lee H.M."/>
            <person name="Leongamornlert D.A."/>
            <person name="Laird G."/>
            <person name="Lloyd C."/>
            <person name="Lloyd D.M."/>
            <person name="Loveland J."/>
            <person name="Lovell J."/>
            <person name="McLaren S."/>
            <person name="McLay K.E."/>
            <person name="McMurray A."/>
            <person name="Mashreghi-Mohammadi M."/>
            <person name="Matthews L."/>
            <person name="Milne S."/>
            <person name="Nickerson T."/>
            <person name="Nguyen M."/>
            <person name="Overton-Larty E."/>
            <person name="Palmer S.A."/>
            <person name="Pearce A.V."/>
            <person name="Peck A.I."/>
            <person name="Pelan S."/>
            <person name="Phillimore B."/>
            <person name="Porter K."/>
            <person name="Rice C.M."/>
            <person name="Rogosin A."/>
            <person name="Ross M.T."/>
            <person name="Sarafidou T."/>
            <person name="Sehra H.K."/>
            <person name="Shownkeen R."/>
            <person name="Skuce C.D."/>
            <person name="Smith M."/>
            <person name="Standring L."/>
            <person name="Sycamore N."/>
            <person name="Tester J."/>
            <person name="Thorpe A."/>
            <person name="Torcasso W."/>
            <person name="Tracey A."/>
            <person name="Tromans A."/>
            <person name="Tsolas J."/>
            <person name="Wall M."/>
            <person name="Walsh J."/>
            <person name="Wang H."/>
            <person name="Weinstock K."/>
            <person name="West A.P."/>
            <person name="Willey D.L."/>
            <person name="Whitehead S.L."/>
            <person name="Wilming L."/>
            <person name="Wray P.W."/>
            <person name="Young L."/>
            <person name="Chen Y."/>
            <person name="Lovering R.C."/>
            <person name="Moschonas N.K."/>
            <person name="Siebert R."/>
            <person name="Fechtel K."/>
            <person name="Bentley D."/>
            <person name="Durbin R.M."/>
            <person name="Hubbard T."/>
            <person name="Doucette-Stamm L."/>
            <person name="Beck S."/>
            <person name="Smith D.R."/>
            <person name="Rogers J."/>
        </authorList>
    </citation>
    <scope>NUCLEOTIDE SEQUENCE [LARGE SCALE GENOMIC DNA]</scope>
</reference>
<reference key="4">
    <citation type="journal article" date="2004" name="Genome Res.">
        <title>The status, quality, and expansion of the NIH full-length cDNA project: the Mammalian Gene Collection (MGC).</title>
        <authorList>
            <consortium name="The MGC Project Team"/>
        </authorList>
    </citation>
    <scope>NUCLEOTIDE SEQUENCE [LARGE SCALE MRNA] (ISOFORM 1)</scope>
    <source>
        <tissue>Brain</tissue>
    </source>
</reference>
<reference key="5">
    <citation type="journal article" date="2000" name="Biochim. Biophys. Acta">
        <title>Structure of the 5' region of the human hexokinase type I (HKI) gene and identification of an additional testis-specific HKI mRNA.</title>
        <authorList>
            <person name="Andreoni F."/>
            <person name="Ruzzo A."/>
            <person name="Magnani M."/>
        </authorList>
    </citation>
    <scope>NUCLEOTIDE SEQUENCE [MRNA] OF 1-126 (ISOFORM 4)</scope>
    <scope>ALTERNATIVE SPLICING</scope>
</reference>
<reference key="6">
    <citation type="journal article" date="1998" name="Blood">
        <title>The erythrocyte-specific hexokinase isozyme (HKR) and the common hexokinase isozyme (HKI) are produced from a single gene by alternate promoters.</title>
        <authorList>
            <person name="Murakami K."/>
            <person name="Piomelli S."/>
        </authorList>
    </citation>
    <scope>NUCLEOTIDE SEQUENCE [GENOMIC DNA] OF 1-20 (ISOFORM 2)</scope>
</reference>
<reference key="7">
    <citation type="submission" date="2009-03" db="UniProtKB">
        <authorList>
            <person name="Bienvenut W.V."/>
            <person name="Waridel P."/>
            <person name="Quadroni M."/>
        </authorList>
    </citation>
    <scope>PROTEIN SEQUENCE OF 1-20; 31-42; 382-396 AND 900-910</scope>
    <scope>ACETYLATION AT MET-1</scope>
    <scope>IDENTIFICATION BY MASS SPECTROMETRY</scope>
    <source>
        <tissue>Embryonic kidney</tissue>
    </source>
</reference>
<reference key="8">
    <citation type="journal article" date="1991" name="J. Biol. Chem.">
        <title>Human hexokinase type I microheterogeneity is due to different amino-terminal sequences.</title>
        <authorList>
            <person name="Magnani M."/>
            <person name="Serafini G."/>
            <person name="Bianchi M."/>
            <person name="Casabianca A."/>
            <person name="Stocchi V."/>
        </authorList>
    </citation>
    <scope>PROTEIN SEQUENCE OF 11-31 AND 103-120</scope>
    <scope>SUBCELLULAR LOCATION</scope>
    <source>
        <tissue>Placenta</tissue>
    </source>
</reference>
<reference key="9">
    <citation type="journal article" date="1992" name="Biochem. J.">
        <title>A recombinant human 'mini'-hexokinase is catalytically active and regulated by hexose 6-phosphates.</title>
        <authorList>
            <person name="Magnani M."/>
            <person name="Bianchi M."/>
            <person name="Casabianca A."/>
            <person name="Stocchi V."/>
            <person name="Daniele A."/>
            <person name="Altruda F."/>
            <person name="Ferrone M."/>
            <person name="Silengo L."/>
        </authorList>
    </citation>
    <scope>NUCLEOTIDE SEQUENCE [MRNA] OF 287-917</scope>
    <scope>FUNCTION</scope>
    <scope>CATALYTIC ACTIVITY</scope>
    <scope>ACTIVITY REGULATION</scope>
    <scope>VARIANT MET-776</scope>
    <source>
        <tissue>Placenta</tissue>
    </source>
</reference>
<reference key="10">
    <citation type="journal article" date="1997" name="Blood">
        <title>Identification of the cDNA for human red blood cell-specific hexokinase isozyme.</title>
        <authorList>
            <person name="Murakami K."/>
            <person name="Piomelli S."/>
        </authorList>
    </citation>
    <scope>ALTERNATIVE SPLICING</scope>
</reference>
<reference key="11">
    <citation type="journal article" date="1996" name="FEBS Lett.">
        <title>Crystallization and preliminary X-ray analysis of human brain hexokinase.</title>
        <authorList>
            <person name="Aleshin A.E."/>
            <person name="Zeng C."/>
            <person name="Fromm H.J."/>
            <person name="Honatko R.B."/>
        </authorList>
    </citation>
    <scope>CRYSTALLIZATION</scope>
</reference>
<reference key="12">
    <citation type="journal article" date="2009" name="Anal. Chem.">
        <title>Lys-N and trypsin cover complementary parts of the phosphoproteome in a refined SCX-based approach.</title>
        <authorList>
            <person name="Gauci S."/>
            <person name="Helbig A.O."/>
            <person name="Slijper M."/>
            <person name="Krijgsveld J."/>
            <person name="Heck A.J."/>
            <person name="Mohammed S."/>
        </authorList>
    </citation>
    <scope>ACETYLATION [LARGE SCALE ANALYSIS] AT MET-1</scope>
    <scope>IDENTIFICATION BY MASS SPECTROMETRY [LARGE SCALE ANALYSIS]</scope>
</reference>
<reference key="13">
    <citation type="journal article" date="2009" name="Eur. J. Hum. Genet.">
        <title>A mutation in an alternative untranslated exon of hexokinase 1 associated with hereditary motor and sensory neuropathy -- Russe (HMSNR).</title>
        <authorList>
            <person name="Hantke J."/>
            <person name="Chandler D."/>
            <person name="King R."/>
            <person name="Wanders R.J."/>
            <person name="Angelicheva D."/>
            <person name="Tournev I."/>
            <person name="McNamara E."/>
            <person name="Kwa M."/>
            <person name="Guergueltcheva V."/>
            <person name="Kaneva R."/>
            <person name="Baas F."/>
            <person name="Kalaydjieva L."/>
        </authorList>
    </citation>
    <scope>INVOLVEMENT IN HMSNR</scope>
</reference>
<reference key="14">
    <citation type="journal article" date="2011" name="BMC Syst. Biol.">
        <title>Initial characterization of the human central proteome.</title>
        <authorList>
            <person name="Burkard T.R."/>
            <person name="Planyavsky M."/>
            <person name="Kaupe I."/>
            <person name="Breitwieser F.P."/>
            <person name="Buerckstuemmer T."/>
            <person name="Bennett K.L."/>
            <person name="Superti-Furga G."/>
            <person name="Colinge J."/>
        </authorList>
    </citation>
    <scope>IDENTIFICATION BY MASS SPECTROMETRY [LARGE SCALE ANALYSIS]</scope>
</reference>
<reference key="15">
    <citation type="journal article" date="2012" name="Cell">
        <title>PKCepsilon promotes oncogenic functions of ATF2 in the nucleus while blocking its apoptotic function at mitochondria.</title>
        <authorList>
            <person name="Lau E."/>
            <person name="Kluger H."/>
            <person name="Varsano T."/>
            <person name="Lee K."/>
            <person name="Scheffler I."/>
            <person name="Rimm D.L."/>
            <person name="Ideker T."/>
            <person name="Ronai Z.A."/>
        </authorList>
    </citation>
    <scope>INTERACTION WITH ATF2 AND VDAC1</scope>
</reference>
<reference key="16">
    <citation type="journal article" date="2015" name="Proteomics">
        <title>N-terminome analysis of the human mitochondrial proteome.</title>
        <authorList>
            <person name="Vaca Jacome A.S."/>
            <person name="Rabilloud T."/>
            <person name="Schaeffer-Reiss C."/>
            <person name="Rompais M."/>
            <person name="Ayoub D."/>
            <person name="Lane L."/>
            <person name="Bairoch A."/>
            <person name="Van Dorsselaer A."/>
            <person name="Carapito C."/>
        </authorList>
    </citation>
    <scope>ACETYLATION [LARGE SCALE ANALYSIS] AT MET-1</scope>
    <scope>IDENTIFICATION BY MASS SPECTROMETRY [LARGE SCALE ANALYSIS]</scope>
</reference>
<reference key="17">
    <citation type="journal article" date="2016" name="Cell">
        <title>Hexokinase is an innate immune receptor for the detection of bacterial peptidoglycan.</title>
        <authorList>
            <person name="Wolf A.J."/>
            <person name="Reyes C.N."/>
            <person name="Liang W."/>
            <person name="Becker C."/>
            <person name="Shimada K."/>
            <person name="Wheeler M.L."/>
            <person name="Cho H.C."/>
            <person name="Popescu N.I."/>
            <person name="Coggeshall K.M."/>
            <person name="Arditi M."/>
            <person name="Underhill D.M."/>
        </authorList>
    </citation>
    <scope>FUNCTION</scope>
    <scope>CATALYTIC ACTIVITY</scope>
    <scope>SUBCELLULAR LOCATION</scope>
    <scope>ACTIVITY REGULATION</scope>
</reference>
<reference key="18">
    <citation type="journal article" date="2017" name="Cell Res.">
        <title>Smad5 acts as an intracellular pH messenger and maintains bioenergetic homeostasis.</title>
        <authorList>
            <person name="Fang Y."/>
            <person name="Liu Z."/>
            <person name="Chen Z."/>
            <person name="Xu X."/>
            <person name="Xiao M."/>
            <person name="Yu Y."/>
            <person name="Zhang Y."/>
            <person name="Zhang X."/>
            <person name="Du Y."/>
            <person name="Jiang C."/>
            <person name="Zhao Y."/>
            <person name="Wang Y."/>
            <person name="Fan B."/>
            <person name="Terheyden-Keighley D."/>
            <person name="Liu Y."/>
            <person name="Shi L."/>
            <person name="Hui Y."/>
            <person name="Zhang X."/>
            <person name="Zhang B."/>
            <person name="Feng H."/>
            <person name="Ma L."/>
            <person name="Zhang Q."/>
            <person name="Jin G."/>
            <person name="Yang Y."/>
            <person name="Xiang B."/>
            <person name="Liu L."/>
            <person name="Zhang X."/>
        </authorList>
    </citation>
    <scope>INTERACTION WITH SMAD5</scope>
</reference>
<reference key="19">
    <citation type="journal article" date="1998" name="Structure">
        <title>The mechanism of regulation of hexokinase: new insights from the crystal structure of recombinant human brain hexokinase complexed with glucose and glucose-6-phosphate.</title>
        <authorList>
            <person name="Aleshin A.E."/>
            <person name="Zeng C."/>
            <person name="Bourenkov G.P."/>
            <person name="Bartunik H.D."/>
            <person name="Fromm H.J."/>
            <person name="Honzatko R.B."/>
        </authorList>
    </citation>
    <scope>X-RAY CRYSTALLOGRAPHY (2.8 ANGSTROMS) OF 16-914 IN COMPLEX WITH GLUCOSE AND GLUCOSE-6-PHOSPHATE</scope>
    <scope>SUBUNIT</scope>
    <scope>DOMAIN</scope>
</reference>
<reference key="20">
    <citation type="journal article" date="1998" name="J. Mol. Biol.">
        <title>Regulation of hexokinase I: crystal structure of recombinant human brain hexokinase complexed with glucose and phosphate.</title>
        <authorList>
            <person name="Aleshin A.E."/>
            <person name="Zeng C."/>
            <person name="Bartunik H.D."/>
            <person name="Fromm H.J."/>
            <person name="Honzatko R.B."/>
        </authorList>
    </citation>
    <scope>X-RAY CRYSTALLOGRAPHY (2.8 ANGSTROMS) OF 16-914</scope>
    <scope>DOMAIN</scope>
</reference>
<reference key="21">
    <citation type="journal article" date="1999" name="Structure">
        <title>Binding of non-catalytic ATP to human hexokinase I highlights the structural components for enzyme-membrane association control.</title>
        <authorList>
            <person name="Rosano C."/>
            <person name="Sabini E."/>
            <person name="Rizzi M."/>
            <person name="Deriu D."/>
            <person name="Murshudov G."/>
            <person name="Bianchi M."/>
            <person name="Serafini G."/>
            <person name="Magnani M."/>
            <person name="Bolognesi M."/>
        </authorList>
    </citation>
    <scope>X-RAY CRYSTALLOGRAPHY (2.25 ANGSTROMS) IN COMPLEX WITH AMP-PNP AND MAGNESIUM</scope>
    <scope>SUBUNIT</scope>
    <scope>DOMAIN</scope>
</reference>
<reference key="22">
    <citation type="journal article" date="2000" name="J. Mol. Biol.">
        <title>Crystal structures of mutant monomeric hexokinase I reveal multiple ADP binding sites and conformational changes relevant to allosteric regulation.</title>
        <authorList>
            <person name="Aleshin A.E."/>
            <person name="Kirby C."/>
            <person name="Liu X."/>
            <person name="Bourenkov G.P."/>
            <person name="Bartunik H.D."/>
            <person name="Fromm H.J."/>
            <person name="Honzatko R.B."/>
        </authorList>
    </citation>
    <scope>X-RAY CRYSTALLOGRAPHY (1.9 ANGSTROMS) IN COMPLEX WITH GLUCOSE; GLUCOSE-6-PHOSPHATE AND ADP</scope>
</reference>
<reference key="23">
    <citation type="journal article" date="1995" name="Blood Cells Mol. Dis.">
        <title>Hexokinase mutations that produce nonspherocytic hemolytic anemia.</title>
        <authorList>
            <person name="Bianchi M."/>
            <person name="Magnani M."/>
        </authorList>
    </citation>
    <scope>VARIANT CNSHA5 SER-529</scope>
</reference>
<reference key="24">
    <citation type="journal article" date="2003" name="Blood">
        <title>HK Utrecht: missense mutation in the active site of human hexokinase associated with hexokinase deficiency and severe nonspherocytic hemolytic anemia.</title>
        <authorList>
            <person name="van Wijk R."/>
            <person name="Rijksen G."/>
            <person name="Huizinga E.G."/>
            <person name="Nieuwenhuis H.K."/>
            <person name="van Solinge W.W."/>
        </authorList>
    </citation>
    <scope>VARIANT CNSHA5 SER-680</scope>
</reference>
<reference key="25">
    <citation type="journal article" date="2014" name="Invest. Ophthalmol. Vis. Sci.">
        <title>A dominant mutation in hexokinase 1 (HK1) causes retinitis pigmentosa.</title>
        <authorList>
            <person name="Sullivan L.S."/>
            <person name="Koboldt D.C."/>
            <person name="Bowne S.J."/>
            <person name="Lang S."/>
            <person name="Blanton S.H."/>
            <person name="Cadena E."/>
            <person name="Avery C.E."/>
            <person name="Lewis R.A."/>
            <person name="Webb-Jones K."/>
            <person name="Wheaton D.H."/>
            <person name="Birch D.G."/>
            <person name="Coussa R."/>
            <person name="Ren H."/>
            <person name="Lopez I."/>
            <person name="Chakarova C."/>
            <person name="Koenekoop R.K."/>
            <person name="Garcia C.A."/>
            <person name="Fulton R.S."/>
            <person name="Wilson R.K."/>
            <person name="Weinstock G.M."/>
            <person name="Daiger S.P."/>
        </authorList>
    </citation>
    <scope>INVOLVEMENT IN RP79</scope>
    <scope>VARIANT RP79 LYS-847</scope>
</reference>
<reference key="26">
    <citation type="journal article" date="2014" name="Invest. Ophthalmol. Vis. Sci.">
        <title>A missense mutation in HK1 leads to autosomal dominant retinitis pigmentosa.</title>
        <authorList>
            <person name="Wang F."/>
            <person name="Wang Y."/>
            <person name="Zhang B."/>
            <person name="Zhao L."/>
            <person name="Lyubasyuk V."/>
            <person name="Wang K."/>
            <person name="Xu M."/>
            <person name="Li Y."/>
            <person name="Wu F."/>
            <person name="Wen C."/>
            <person name="Bernstein P.S."/>
            <person name="Lin D."/>
            <person name="Zhu S."/>
            <person name="Wang H."/>
            <person name="Zhang K."/>
            <person name="Chen R."/>
        </authorList>
    </citation>
    <scope>INVOLVEMENT IN RP79</scope>
    <scope>VARIANT RP79 LYS-847</scope>
    <scope>CHARACTERIZATION OF VARIANT RP79 LYS-847</scope>
    <scope>FUNCTION</scope>
</reference>
<reference key="27">
    <citation type="journal article" date="2019" name="Eur. J. Hum. Genet.">
        <title>De novo variants in HK1 associated with neurodevelopmental abnormalities and visual impairment.</title>
        <authorList>
            <person name="Okur V."/>
            <person name="Cho M.T."/>
            <person name="van Wijk R."/>
            <person name="van Oirschot B."/>
            <person name="Picker J."/>
            <person name="Coury S.A."/>
            <person name="Grange D."/>
            <person name="Manwaring L."/>
            <person name="Krantz I."/>
            <person name="Muraresku C.C."/>
            <person name="Hulick P.J."/>
            <person name="May H."/>
            <person name="Pierce E."/>
            <person name="Place E."/>
            <person name="Bujakowska K."/>
            <person name="Telegrafi A."/>
            <person name="Douglas G."/>
            <person name="Monaghan K.G."/>
            <person name="Begtrup A."/>
            <person name="Wilson A."/>
            <person name="Retterer K."/>
            <person name="Anyane-Yeboa K."/>
            <person name="Chung W.K."/>
        </authorList>
    </citation>
    <scope>INVOLVEMENT IN NEDVIBA</scope>
    <scope>VARIANTS NEDVIBA GLU-414; GLU-418; LEU-445 AND MET-457</scope>
    <scope>CHARACTERIZATION OF VARIANTS NEDVIBA GLU-418 AND LEU-445</scope>
</reference>
<reference key="28">
    <citation type="journal article" date="2021" name="BMC Med. Genomics">
        <title>Novel homozygous mutations in Pakistani families with Charcot-Marie-Tooth disease.</title>
        <authorList>
            <person name="Kanwal S."/>
            <person name="Choi Y.J."/>
            <person name="Lim S.O."/>
            <person name="Choi H.J."/>
            <person name="Park J.H."/>
            <person name="Nuzhat R."/>
            <person name="Khan A."/>
            <person name="Perveen S."/>
            <person name="Choi B.O."/>
            <person name="Chung K.W."/>
        </authorList>
    </citation>
    <scope>VARIANT HMSNR 7-ARG--SER-917 DEL (ISOFORM 3)</scope>
</reference>
<feature type="chain" id="PRO_0000197585" description="Hexokinase-1">
    <location>
        <begin position="1"/>
        <end position="917"/>
    </location>
</feature>
<feature type="domain" description="Hexokinase 1" evidence="3">
    <location>
        <begin position="16"/>
        <end position="458"/>
    </location>
</feature>
<feature type="domain" description="Hexokinase 2" evidence="3">
    <location>
        <begin position="464"/>
        <end position="906"/>
    </location>
</feature>
<feature type="region of interest" description="Mitochondrial-binding peptide (MBP)" evidence="29">
    <location>
        <begin position="1"/>
        <end position="10"/>
    </location>
</feature>
<feature type="region of interest" description="Hexokinase small subdomain 1" evidence="3">
    <location>
        <begin position="73"/>
        <end position="207"/>
    </location>
</feature>
<feature type="region of interest" description="Hexokinase large subdomain 1" evidence="3">
    <location>
        <begin position="208"/>
        <end position="447"/>
    </location>
</feature>
<feature type="region of interest" description="Hexokinase small subdomain 2" evidence="3">
    <location>
        <begin position="521"/>
        <end position="655"/>
    </location>
</feature>
<feature type="region of interest" description="Hexokinase large subdomain 2" evidence="3">
    <location>
        <begin position="656"/>
        <end position="895"/>
    </location>
</feature>
<feature type="binding site" evidence="4 5 32 33 36">
    <location>
        <position position="30"/>
    </location>
    <ligand>
        <name>ATP</name>
        <dbReference type="ChEBI" id="CHEBI:30616"/>
        <label>1</label>
    </ligand>
</feature>
<feature type="binding site" evidence="4 5 20 32 34 36 38 39 40">
    <location>
        <begin position="84"/>
        <end position="91"/>
    </location>
    <ligand>
        <name>D-glucose 6-phosphate</name>
        <dbReference type="ChEBI" id="CHEBI:61548"/>
        <label>1</label>
    </ligand>
</feature>
<feature type="binding site" evidence="5 21 33 35">
    <location>
        <begin position="84"/>
        <end position="89"/>
    </location>
    <ligand>
        <name>ATP</name>
        <dbReference type="ChEBI" id="CHEBI:30616"/>
        <label>1</label>
    </ligand>
</feature>
<feature type="binding site" evidence="5 20 21 33 34 35 37 38 39 40">
    <location>
        <position position="155"/>
    </location>
    <ligand>
        <name>D-glucose</name>
        <dbReference type="ChEBI" id="CHEBI:4167"/>
        <label>1</label>
    </ligand>
</feature>
<feature type="binding site" evidence="4 5 20 21 32 33 34 35 36 37 38 39 40 41">
    <location>
        <begin position="172"/>
        <end position="173"/>
    </location>
    <ligand>
        <name>D-glucose</name>
        <dbReference type="ChEBI" id="CHEBI:4167"/>
        <label>1</label>
    </ligand>
</feature>
<feature type="binding site" evidence="4 5 20 21 32 33 34 35 36 37 38 39 40 41">
    <location>
        <begin position="208"/>
        <end position="209"/>
    </location>
    <ligand>
        <name>D-glucose</name>
        <dbReference type="ChEBI" id="CHEBI:4167"/>
        <label>1</label>
    </ligand>
</feature>
<feature type="binding site" evidence="4 5 20 32 34 36 38 39 40">
    <location>
        <position position="209"/>
    </location>
    <ligand>
        <name>D-glucose 6-phosphate</name>
        <dbReference type="ChEBI" id="CHEBI:61548"/>
        <label>1</label>
    </ligand>
</feature>
<feature type="binding site" evidence="4 5 20 32 34 36 37 38 39 40 41">
    <location>
        <position position="232"/>
    </location>
    <ligand>
        <name>D-glucose 6-phosphate</name>
        <dbReference type="ChEBI" id="CHEBI:61548"/>
        <label>1</label>
    </ligand>
</feature>
<feature type="binding site" evidence="4 5 20 21 32 33 34 35 36 37 38 39 40 41">
    <location>
        <position position="235"/>
    </location>
    <ligand>
        <name>D-glucose</name>
        <dbReference type="ChEBI" id="CHEBI:4167"/>
        <label>1</label>
    </ligand>
</feature>
<feature type="binding site" evidence="4 5 20 21 32 33 34 35 36 37 38 39 40 41">
    <location>
        <position position="260"/>
    </location>
    <ligand>
        <name>D-glucose</name>
        <dbReference type="ChEBI" id="CHEBI:4167"/>
        <label>1</label>
    </ligand>
</feature>
<feature type="binding site" evidence="4 5 20 21 32 33 34 35 36 37 38 39 40 41">
    <location>
        <begin position="291"/>
        <end position="294"/>
    </location>
    <ligand>
        <name>D-glucose</name>
        <dbReference type="ChEBI" id="CHEBI:4167"/>
        <label>1</label>
    </ligand>
</feature>
<feature type="binding site" evidence="4 36">
    <location>
        <position position="345"/>
    </location>
    <ligand>
        <name>ATP</name>
        <dbReference type="ChEBI" id="CHEBI:30616"/>
        <label>1</label>
    </ligand>
</feature>
<feature type="binding site" evidence="4 5 20 32 34 36 37 38 39 40 41">
    <location>
        <begin position="413"/>
        <end position="415"/>
    </location>
    <ligand>
        <name>D-glucose 6-phosphate</name>
        <dbReference type="ChEBI" id="CHEBI:61548"/>
        <label>1</label>
    </ligand>
</feature>
<feature type="binding site" evidence="4 5 32 33 36">
    <location>
        <begin position="425"/>
        <end position="426"/>
    </location>
    <ligand>
        <name>ATP</name>
        <dbReference type="ChEBI" id="CHEBI:30616"/>
        <label>1</label>
    </ligand>
</feature>
<feature type="binding site" evidence="4 5 20 32 34 36 37 38 39 40 41">
    <location>
        <position position="449"/>
    </location>
    <ligand>
        <name>D-glucose 6-phosphate</name>
        <dbReference type="ChEBI" id="CHEBI:61548"/>
        <label>1</label>
    </ligand>
</feature>
<feature type="binding site" evidence="5 33">
    <location>
        <begin position="532"/>
        <end position="537"/>
    </location>
    <ligand>
        <name>ATP</name>
        <dbReference type="ChEBI" id="CHEBI:30616"/>
        <label>2</label>
    </ligand>
</feature>
<feature type="binding site" evidence="4 5 32 36 38 39 40">
    <location>
        <begin position="532"/>
        <end position="536"/>
    </location>
    <ligand>
        <name>D-glucose 6-phosphate</name>
        <dbReference type="ChEBI" id="CHEBI:61548"/>
        <label>2</label>
    </ligand>
</feature>
<feature type="binding site" evidence="5 20 33 34 37 38 39 40 41">
    <location>
        <begin position="603"/>
        <end position="604"/>
    </location>
    <ligand>
        <name>D-glucose</name>
        <dbReference type="ChEBI" id="CHEBI:4167"/>
        <label>2</label>
    </ligand>
</feature>
<feature type="binding site" evidence="4 5 20 32 33 34 36 37 38 39 40 41">
    <location>
        <begin position="620"/>
        <end position="621"/>
    </location>
    <ligand>
        <name>D-glucose</name>
        <dbReference type="ChEBI" id="CHEBI:4167"/>
        <label>2</label>
    </ligand>
</feature>
<feature type="binding site" evidence="4 5 20 32 33 34 36 37 38 39 40 41">
    <location>
        <begin position="656"/>
        <end position="657"/>
    </location>
    <ligand>
        <name>D-glucose</name>
        <dbReference type="ChEBI" id="CHEBI:4167"/>
        <label>2</label>
    </ligand>
</feature>
<feature type="binding site" evidence="4 5 20 32 34 36 39 40">
    <location>
        <position position="657"/>
    </location>
    <ligand>
        <name>D-glucose 6-phosphate</name>
        <dbReference type="ChEBI" id="CHEBI:61548"/>
        <label>2</label>
    </ligand>
</feature>
<feature type="binding site" evidence="5 21 33 35">
    <location>
        <position position="680"/>
    </location>
    <ligand>
        <name>ATP</name>
        <dbReference type="ChEBI" id="CHEBI:30616"/>
        <label>2</label>
    </ligand>
</feature>
<feature type="binding site" evidence="4 5 20 32 34 36 37 38 39 40 41">
    <location>
        <position position="680"/>
    </location>
    <ligand>
        <name>D-glucose 6-phosphate</name>
        <dbReference type="ChEBI" id="CHEBI:61548"/>
        <label>2</label>
    </ligand>
</feature>
<feature type="binding site" evidence="4 5 20 32 33 34 36 37 38 39 40 41">
    <location>
        <begin position="682"/>
        <end position="683"/>
    </location>
    <ligand>
        <name>D-glucose</name>
        <dbReference type="ChEBI" id="CHEBI:4167"/>
        <label>2</label>
    </ligand>
</feature>
<feature type="binding site" evidence="4 5 20 32 33 34 36 37 38 39 40 41">
    <location>
        <position position="708"/>
    </location>
    <ligand>
        <name>D-glucose</name>
        <dbReference type="ChEBI" id="CHEBI:4167"/>
        <label>2</label>
    </ligand>
</feature>
<feature type="binding site" evidence="4 5 20 32 33 34 36 37 38 39 40 41">
    <location>
        <position position="742"/>
    </location>
    <ligand>
        <name>D-glucose</name>
        <dbReference type="ChEBI" id="CHEBI:4167"/>
        <label>2</label>
    </ligand>
</feature>
<feature type="binding site" evidence="5 33">
    <location>
        <begin position="747"/>
        <end position="748"/>
    </location>
    <ligand>
        <name>ATP</name>
        <dbReference type="ChEBI" id="CHEBI:30616"/>
        <label>2</label>
    </ligand>
</feature>
<feature type="binding site" evidence="5 33">
    <location>
        <begin position="784"/>
        <end position="788"/>
    </location>
    <ligand>
        <name>ATP</name>
        <dbReference type="ChEBI" id="CHEBI:30616"/>
        <label>2</label>
    </ligand>
</feature>
<feature type="binding site" evidence="4 5 20 32 34 36 37 38 39 40 41">
    <location>
        <begin position="861"/>
        <end position="863"/>
    </location>
    <ligand>
        <name>D-glucose 6-phosphate</name>
        <dbReference type="ChEBI" id="CHEBI:61548"/>
        <label>2</label>
    </ligand>
</feature>
<feature type="binding site" evidence="5 21 33 35">
    <location>
        <begin position="863"/>
        <end position="867"/>
    </location>
    <ligand>
        <name>ATP</name>
        <dbReference type="ChEBI" id="CHEBI:30616"/>
        <label>2</label>
    </ligand>
</feature>
<feature type="binding site" evidence="4 5 20 32 34 36 37 39 40 41">
    <location>
        <position position="897"/>
    </location>
    <ligand>
        <name>D-glucose 6-phosphate</name>
        <dbReference type="ChEBI" id="CHEBI:61548"/>
        <label>2</label>
    </ligand>
</feature>
<feature type="modified residue" description="N-acetylmethionine" evidence="23 42 43">
    <location>
        <position position="1"/>
    </location>
</feature>
<feature type="modified residue" description="Phosphoserine" evidence="1">
    <location>
        <position position="337"/>
    </location>
</feature>
<feature type="splice variant" id="VSP_002071" description="In isoform 2." evidence="27">
    <original>MIAAQLLAYYFTELKDDQVKK</original>
    <variation>MDCEHSLSLPCRGAEAWEIG</variation>
    <location>
        <begin position="1"/>
        <end position="21"/>
    </location>
</feature>
<feature type="splice variant" id="VSP_002072" description="In isoform 3." evidence="27">
    <original>MIAAQLLAYYFTELKDDQVKK</original>
    <variation>MGQICQRESATAAEKPKLHLLAESE</variation>
    <location>
        <begin position="1"/>
        <end position="21"/>
    </location>
</feature>
<feature type="splice variant" id="VSP_002073" description="In isoform 4." evidence="24">
    <original>MIAAQLLAYYFTELKDDQVKK</original>
    <variation>MAKRALHDF</variation>
    <location>
        <begin position="1"/>
        <end position="21"/>
    </location>
</feature>
<feature type="sequence variant" id="VAR_083222" description="In NEDVIBA; dbSNP:rs1064795154." evidence="16">
    <original>G</original>
    <variation>E</variation>
    <location>
        <position position="414"/>
    </location>
</feature>
<feature type="sequence variant" id="VAR_083223" description="In NEDVIBA; no effect on the affinity for glucose or ATP; no effect on thermal stability; dbSNP:rs1564557037." evidence="16">
    <original>K</original>
    <variation>E</variation>
    <location>
        <position position="418"/>
    </location>
</feature>
<feature type="sequence variant" id="VAR_083224" description="In NEDVIBA; no effect on the affinity for glucose or ATP; no effect on thermal stability; dbSNP:rs1064794848." evidence="16">
    <original>S</original>
    <variation>L</variation>
    <location>
        <position position="445"/>
    </location>
</feature>
<feature type="sequence variant" id="VAR_083225" description="In NEDVIBA; dbSNP:rs1057517928." evidence="16">
    <original>T</original>
    <variation>M</variation>
    <location>
        <position position="457"/>
    </location>
</feature>
<feature type="sequence variant" id="VAR_009878" description="In CNSHA5; dbSNP:rs137853249." evidence="19">
    <original>L</original>
    <variation>S</variation>
    <location>
        <position position="529"/>
    </location>
</feature>
<feature type="sequence variant" id="VAR_023780" description="In CNSHA5; HK Utrecht; dbSNP:rs398122379." evidence="7">
    <original>T</original>
    <variation>S</variation>
    <location>
        <position position="680"/>
    </location>
</feature>
<feature type="sequence variant" id="VAR_023781" description="In dbSNP:rs1054203." evidence="8 17">
    <original>L</original>
    <variation>M</variation>
    <location>
        <position position="776"/>
    </location>
</feature>
<feature type="sequence variant" id="VAR_078923" description="In RP79; uncertain significance; no effect on hexokinase activity; no effect on protein abundance; dbSNP:rs777849213." evidence="12 13">
    <original>E</original>
    <variation>K</variation>
    <location>
        <position position="847"/>
    </location>
</feature>
<feature type="sequence conflict" description="In Ref. 1; AAA52646 and 9; CAA47379." evidence="27" ref="1 9">
    <original>D</original>
    <variation>N</variation>
    <location>
        <position position="730"/>
    </location>
</feature>
<feature type="helix" evidence="44">
    <location>
        <begin position="17"/>
        <end position="25"/>
    </location>
</feature>
<feature type="helix" evidence="44">
    <location>
        <begin position="27"/>
        <end position="29"/>
    </location>
</feature>
<feature type="helix" evidence="44">
    <location>
        <begin position="33"/>
        <end position="51"/>
    </location>
</feature>
<feature type="turn" evidence="44">
    <location>
        <begin position="53"/>
        <end position="55"/>
    </location>
</feature>
<feature type="helix" evidence="44">
    <location>
        <begin position="56"/>
        <end position="58"/>
    </location>
</feature>
<feature type="strand" evidence="44">
    <location>
        <begin position="78"/>
        <end position="100"/>
    </location>
</feature>
<feature type="strand" evidence="44">
    <location>
        <begin position="103"/>
        <end position="112"/>
    </location>
</feature>
<feature type="helix" evidence="44">
    <location>
        <begin position="116"/>
        <end position="119"/>
    </location>
</feature>
<feature type="strand" evidence="44">
    <location>
        <begin position="120"/>
        <end position="122"/>
    </location>
</feature>
<feature type="helix" evidence="44">
    <location>
        <begin position="123"/>
        <end position="141"/>
    </location>
</feature>
<feature type="strand" evidence="47">
    <location>
        <begin position="144"/>
        <end position="146"/>
    </location>
</feature>
<feature type="strand" evidence="44">
    <location>
        <begin position="150"/>
        <end position="154"/>
    </location>
</feature>
<feature type="strand" evidence="48">
    <location>
        <begin position="161"/>
        <end position="164"/>
    </location>
</feature>
<feature type="turn" evidence="48">
    <location>
        <begin position="179"/>
        <end position="182"/>
    </location>
</feature>
<feature type="helix" evidence="44">
    <location>
        <begin position="185"/>
        <end position="196"/>
    </location>
</feature>
<feature type="strand" evidence="44">
    <location>
        <begin position="203"/>
        <end position="207"/>
    </location>
</feature>
<feature type="helix" evidence="44">
    <location>
        <begin position="209"/>
        <end position="220"/>
    </location>
</feature>
<feature type="strand" evidence="44">
    <location>
        <begin position="224"/>
        <end position="241"/>
    </location>
</feature>
<feature type="helix" evidence="44">
    <location>
        <begin position="242"/>
        <end position="244"/>
    </location>
</feature>
<feature type="strand" evidence="44">
    <location>
        <begin position="252"/>
        <end position="258"/>
    </location>
</feature>
<feature type="helix" evidence="44">
    <location>
        <begin position="261"/>
        <end position="263"/>
    </location>
</feature>
<feature type="turn" evidence="44">
    <location>
        <begin position="264"/>
        <end position="273"/>
    </location>
</feature>
<feature type="helix" evidence="44">
    <location>
        <begin position="276"/>
        <end position="283"/>
    </location>
</feature>
<feature type="strand" evidence="44">
    <location>
        <begin position="285"/>
        <end position="287"/>
    </location>
</feature>
<feature type="helix" evidence="44">
    <location>
        <begin position="294"/>
        <end position="297"/>
    </location>
</feature>
<feature type="helix" evidence="44">
    <location>
        <begin position="299"/>
        <end position="315"/>
    </location>
</feature>
<feature type="helix" evidence="44">
    <location>
        <begin position="320"/>
        <end position="322"/>
    </location>
</feature>
<feature type="turn" evidence="44">
    <location>
        <begin position="326"/>
        <end position="329"/>
    </location>
</feature>
<feature type="helix" evidence="44">
    <location>
        <begin position="336"/>
        <end position="342"/>
    </location>
</feature>
<feature type="turn" evidence="44">
    <location>
        <begin position="345"/>
        <end position="347"/>
    </location>
</feature>
<feature type="helix" evidence="44">
    <location>
        <begin position="348"/>
        <end position="358"/>
    </location>
</feature>
<feature type="helix" evidence="44">
    <location>
        <begin position="365"/>
        <end position="401"/>
    </location>
</feature>
<feature type="strand" evidence="44">
    <location>
        <begin position="404"/>
        <end position="413"/>
    </location>
</feature>
<feature type="helix" evidence="44">
    <location>
        <begin position="415"/>
        <end position="419"/>
    </location>
</feature>
<feature type="helix" evidence="44">
    <location>
        <begin position="423"/>
        <end position="434"/>
    </location>
</feature>
<feature type="strand" evidence="44">
    <location>
        <begin position="438"/>
        <end position="444"/>
    </location>
</feature>
<feature type="helix" evidence="44">
    <location>
        <begin position="449"/>
        <end position="475"/>
    </location>
</feature>
<feature type="helix" evidence="44">
    <location>
        <begin position="481"/>
        <end position="499"/>
    </location>
</feature>
<feature type="helix" evidence="44">
    <location>
        <begin position="501"/>
        <end position="504"/>
    </location>
</feature>
<feature type="strand" evidence="44">
    <location>
        <begin position="526"/>
        <end position="546"/>
    </location>
</feature>
<feature type="strand" evidence="45">
    <location>
        <begin position="548"/>
        <end position="550"/>
    </location>
</feature>
<feature type="strand" evidence="44">
    <location>
        <begin position="552"/>
        <end position="560"/>
    </location>
</feature>
<feature type="helix" evidence="44">
    <location>
        <begin position="564"/>
        <end position="567"/>
    </location>
</feature>
<feature type="strand" evidence="46">
    <location>
        <begin position="568"/>
        <end position="570"/>
    </location>
</feature>
<feature type="helix" evidence="44">
    <location>
        <begin position="571"/>
        <end position="589"/>
    </location>
</feature>
<feature type="strand" evidence="44">
    <location>
        <begin position="597"/>
        <end position="602"/>
    </location>
</feature>
<feature type="strand" evidence="44">
    <location>
        <begin position="606"/>
        <end position="610"/>
    </location>
</feature>
<feature type="strand" evidence="44">
    <location>
        <begin position="613"/>
        <end position="616"/>
    </location>
</feature>
<feature type="helix" evidence="44">
    <location>
        <begin position="633"/>
        <end position="644"/>
    </location>
</feature>
<feature type="strand" evidence="44">
    <location>
        <begin position="650"/>
        <end position="655"/>
    </location>
</feature>
<feature type="helix" evidence="44">
    <location>
        <begin position="657"/>
        <end position="666"/>
    </location>
</feature>
<feature type="strand" evidence="44">
    <location>
        <begin position="672"/>
        <end position="689"/>
    </location>
</feature>
<feature type="turn" evidence="44">
    <location>
        <begin position="690"/>
        <end position="692"/>
    </location>
</feature>
<feature type="strand" evidence="44">
    <location>
        <begin position="700"/>
        <end position="706"/>
    </location>
</feature>
<feature type="helix" evidence="44">
    <location>
        <begin position="709"/>
        <end position="711"/>
    </location>
</feature>
<feature type="turn" evidence="44">
    <location>
        <begin position="712"/>
        <end position="715"/>
    </location>
</feature>
<feature type="turn" evidence="44">
    <location>
        <begin position="717"/>
        <end position="721"/>
    </location>
</feature>
<feature type="helix" evidence="44">
    <location>
        <begin position="724"/>
        <end position="731"/>
    </location>
</feature>
<feature type="turn" evidence="44">
    <location>
        <begin position="734"/>
        <end position="737"/>
    </location>
</feature>
<feature type="helix" evidence="44">
    <location>
        <begin position="742"/>
        <end position="744"/>
    </location>
</feature>
<feature type="turn" evidence="44">
    <location>
        <begin position="747"/>
        <end position="749"/>
    </location>
</feature>
<feature type="helix" evidence="44">
    <location>
        <begin position="750"/>
        <end position="763"/>
    </location>
</feature>
<feature type="helix" evidence="44">
    <location>
        <begin position="768"/>
        <end position="770"/>
    </location>
</feature>
<feature type="turn" evidence="44">
    <location>
        <begin position="774"/>
        <end position="777"/>
    </location>
</feature>
<feature type="helix" evidence="44">
    <location>
        <begin position="784"/>
        <end position="790"/>
    </location>
</feature>
<feature type="helix" evidence="44">
    <location>
        <begin position="797"/>
        <end position="807"/>
    </location>
</feature>
<feature type="helix" evidence="44">
    <location>
        <begin position="813"/>
        <end position="848"/>
    </location>
</feature>
<feature type="strand" evidence="44">
    <location>
        <begin position="852"/>
        <end position="861"/>
    </location>
</feature>
<feature type="helix" evidence="44">
    <location>
        <begin position="863"/>
        <end position="867"/>
    </location>
</feature>
<feature type="helix" evidence="44">
    <location>
        <begin position="871"/>
        <end position="882"/>
    </location>
</feature>
<feature type="strand" evidence="44">
    <location>
        <begin position="886"/>
        <end position="892"/>
    </location>
</feature>
<feature type="helix" evidence="44">
    <location>
        <begin position="898"/>
        <end position="912"/>
    </location>
</feature>
<feature type="sequence variant" id="VAR_087589" description="In HMSNR." evidence="18">
    <location sequence="P19367-3">
        <begin position="7"/>
        <end position="917"/>
    </location>
</feature>
<evidence type="ECO:0000250" key="1">
    <source>
        <dbReference type="UniProtKB" id="P05708"/>
    </source>
</evidence>
<evidence type="ECO:0000250" key="2">
    <source>
        <dbReference type="UniProtKB" id="P17710"/>
    </source>
</evidence>
<evidence type="ECO:0000255" key="3">
    <source>
        <dbReference type="PROSITE-ProRule" id="PRU01084"/>
    </source>
</evidence>
<evidence type="ECO:0000269" key="4">
    <source>
    </source>
</evidence>
<evidence type="ECO:0000269" key="5">
    <source>
    </source>
</evidence>
<evidence type="ECO:0000269" key="6">
    <source>
    </source>
</evidence>
<evidence type="ECO:0000269" key="7">
    <source>
    </source>
</evidence>
<evidence type="ECO:0000269" key="8">
    <source>
    </source>
</evidence>
<evidence type="ECO:0000269" key="9">
    <source>
    </source>
</evidence>
<evidence type="ECO:0000269" key="10">
    <source>
    </source>
</evidence>
<evidence type="ECO:0000269" key="11">
    <source>
    </source>
</evidence>
<evidence type="ECO:0000269" key="12">
    <source>
    </source>
</evidence>
<evidence type="ECO:0000269" key="13">
    <source>
    </source>
</evidence>
<evidence type="ECO:0000269" key="14">
    <source>
    </source>
</evidence>
<evidence type="ECO:0000269" key="15">
    <source>
    </source>
</evidence>
<evidence type="ECO:0000269" key="16">
    <source>
    </source>
</evidence>
<evidence type="ECO:0000269" key="17">
    <source>
    </source>
</evidence>
<evidence type="ECO:0000269" key="18">
    <source>
    </source>
</evidence>
<evidence type="ECO:0000269" key="19">
    <source>
    </source>
</evidence>
<evidence type="ECO:0000269" key="20">
    <source>
    </source>
</evidence>
<evidence type="ECO:0000269" key="21">
    <source>
    </source>
</evidence>
<evidence type="ECO:0000269" key="22">
    <source ref="6"/>
</evidence>
<evidence type="ECO:0000269" key="23">
    <source ref="7"/>
</evidence>
<evidence type="ECO:0000303" key="24">
    <source>
    </source>
</evidence>
<evidence type="ECO:0000303" key="25">
    <source>
    </source>
</evidence>
<evidence type="ECO:0000303" key="26">
    <source>
    </source>
</evidence>
<evidence type="ECO:0000305" key="27"/>
<evidence type="ECO:0000305" key="28">
    <source>
    </source>
</evidence>
<evidence type="ECO:0000305" key="29">
    <source>
    </source>
</evidence>
<evidence type="ECO:0000305" key="30">
    <source>
    </source>
</evidence>
<evidence type="ECO:0000312" key="31">
    <source>
        <dbReference type="HGNC" id="HGNC:4922"/>
    </source>
</evidence>
<evidence type="ECO:0007744" key="32">
    <source>
        <dbReference type="PDB" id="1CZA"/>
    </source>
</evidence>
<evidence type="ECO:0007744" key="33">
    <source>
        <dbReference type="PDB" id="1DGK"/>
    </source>
</evidence>
<evidence type="ECO:0007744" key="34">
    <source>
        <dbReference type="PDB" id="1HKB"/>
    </source>
</evidence>
<evidence type="ECO:0007744" key="35">
    <source>
        <dbReference type="PDB" id="1HKC"/>
    </source>
</evidence>
<evidence type="ECO:0007744" key="36">
    <source>
        <dbReference type="PDB" id="1QHA"/>
    </source>
</evidence>
<evidence type="ECO:0007744" key="37">
    <source>
        <dbReference type="PDB" id="4F9O"/>
    </source>
</evidence>
<evidence type="ECO:0007744" key="38">
    <source>
        <dbReference type="PDB" id="4FOE"/>
    </source>
</evidence>
<evidence type="ECO:0007744" key="39">
    <source>
        <dbReference type="PDB" id="4FOI"/>
    </source>
</evidence>
<evidence type="ECO:0007744" key="40">
    <source>
        <dbReference type="PDB" id="4FPA"/>
    </source>
</evidence>
<evidence type="ECO:0007744" key="41">
    <source>
        <dbReference type="PDB" id="4FPB"/>
    </source>
</evidence>
<evidence type="ECO:0007744" key="42">
    <source>
    </source>
</evidence>
<evidence type="ECO:0007744" key="43">
    <source>
    </source>
</evidence>
<evidence type="ECO:0007829" key="44">
    <source>
        <dbReference type="PDB" id="1CZA"/>
    </source>
</evidence>
<evidence type="ECO:0007829" key="45">
    <source>
        <dbReference type="PDB" id="1QHA"/>
    </source>
</evidence>
<evidence type="ECO:0007829" key="46">
    <source>
        <dbReference type="PDB" id="4F9O"/>
    </source>
</evidence>
<evidence type="ECO:0007829" key="47">
    <source>
        <dbReference type="PDB" id="4FOI"/>
    </source>
</evidence>
<evidence type="ECO:0007829" key="48">
    <source>
        <dbReference type="PDB" id="4FPB"/>
    </source>
</evidence>
<comment type="function">
    <text evidence="1 8 13 14">Catalyzes the phosphorylation of various hexoses, such as D-glucose, D-glucosamine, D-fructose, D-mannose and 2-deoxy-D-glucose, to hexose 6-phosphate (D-glucose 6-phosphate, D-glucosamine 6-phosphate, D-fructose 6-phosphate, D-mannose 6-phosphate and 2-deoxy-D-glucose 6-phosphate, respectively) (PubMed:1637300, PubMed:25316723, PubMed:27374331). Does not phosphorylate N-acetyl-D-glucosamine (PubMed:27374331). Mediates the initial step of glycolysis by catalyzing phosphorylation of D-glucose to D-glucose 6-phosphate (By similarity). Involved in innate immunity and inflammation by acting as a pattern recognition receptor for bacterial peptidoglycan (PubMed:27374331). When released in the cytosol, N-acetyl-D-glucosamine component of bacterial peptidoglycan inhibits the hexokinase activity of HK1 and causes its dissociation from mitochondrial outer membrane, thereby activating the NLRP3 inflammasome (PubMed:27374331).</text>
</comment>
<comment type="catalytic activity">
    <reaction evidence="8 14">
        <text>a D-hexose + ATP = a D-hexose 6-phosphate + ADP + H(+)</text>
        <dbReference type="Rhea" id="RHEA:22740"/>
        <dbReference type="ChEBI" id="CHEBI:4194"/>
        <dbReference type="ChEBI" id="CHEBI:15378"/>
        <dbReference type="ChEBI" id="CHEBI:30616"/>
        <dbReference type="ChEBI" id="CHEBI:229467"/>
        <dbReference type="ChEBI" id="CHEBI:456216"/>
        <dbReference type="EC" id="2.7.1.1"/>
    </reaction>
    <physiologicalReaction direction="left-to-right" evidence="8 14">
        <dbReference type="Rhea" id="RHEA:22741"/>
    </physiologicalReaction>
</comment>
<comment type="catalytic activity">
    <reaction evidence="1">
        <text>D-fructose + ATP = D-fructose 6-phosphate + ADP + H(+)</text>
        <dbReference type="Rhea" id="RHEA:16125"/>
        <dbReference type="ChEBI" id="CHEBI:15378"/>
        <dbReference type="ChEBI" id="CHEBI:30616"/>
        <dbReference type="ChEBI" id="CHEBI:37721"/>
        <dbReference type="ChEBI" id="CHEBI:61527"/>
        <dbReference type="ChEBI" id="CHEBI:456216"/>
        <dbReference type="EC" id="2.7.1.1"/>
    </reaction>
    <physiologicalReaction direction="left-to-right" evidence="1">
        <dbReference type="Rhea" id="RHEA:16126"/>
    </physiologicalReaction>
</comment>
<comment type="catalytic activity">
    <reaction evidence="1">
        <text>D-glucose + ATP = D-glucose 6-phosphate + ADP + H(+)</text>
        <dbReference type="Rhea" id="RHEA:17825"/>
        <dbReference type="ChEBI" id="CHEBI:4167"/>
        <dbReference type="ChEBI" id="CHEBI:15378"/>
        <dbReference type="ChEBI" id="CHEBI:30616"/>
        <dbReference type="ChEBI" id="CHEBI:61548"/>
        <dbReference type="ChEBI" id="CHEBI:456216"/>
        <dbReference type="EC" id="2.7.1.1"/>
    </reaction>
    <physiologicalReaction direction="left-to-right" evidence="1">
        <dbReference type="Rhea" id="RHEA:17826"/>
    </physiologicalReaction>
</comment>
<comment type="catalytic activity">
    <reaction evidence="1">
        <text>D-mannose + ATP = D-mannose 6-phosphate + ADP + H(+)</text>
        <dbReference type="Rhea" id="RHEA:11028"/>
        <dbReference type="ChEBI" id="CHEBI:4208"/>
        <dbReference type="ChEBI" id="CHEBI:15378"/>
        <dbReference type="ChEBI" id="CHEBI:30616"/>
        <dbReference type="ChEBI" id="CHEBI:58735"/>
        <dbReference type="ChEBI" id="CHEBI:456216"/>
        <dbReference type="EC" id="2.7.1.1"/>
    </reaction>
    <physiologicalReaction direction="left-to-right" evidence="1">
        <dbReference type="Rhea" id="RHEA:11029"/>
    </physiologicalReaction>
</comment>
<comment type="catalytic activity">
    <reaction evidence="14">
        <text>D-glucosamine + ATP = D-glucosamine 6-phosphate + ADP + H(+)</text>
        <dbReference type="Rhea" id="RHEA:10948"/>
        <dbReference type="ChEBI" id="CHEBI:15378"/>
        <dbReference type="ChEBI" id="CHEBI:30616"/>
        <dbReference type="ChEBI" id="CHEBI:58723"/>
        <dbReference type="ChEBI" id="CHEBI:58725"/>
        <dbReference type="ChEBI" id="CHEBI:456216"/>
        <dbReference type="EC" id="2.7.1.1"/>
    </reaction>
    <physiologicalReaction direction="left-to-right" evidence="14">
        <dbReference type="Rhea" id="RHEA:10949"/>
    </physiologicalReaction>
</comment>
<comment type="activity regulation">
    <text evidence="8 14">Hexokinase is an allosteric enzyme inhibited by its product D-glucose 6-phosphate (PubMed:1637300). Hexokinase activity is inhibited by N-acetyl-D-glucosamine (PubMed:27374331).</text>
</comment>
<comment type="pathway">
    <text evidence="28 30">Carbohydrate metabolism; hexose metabolism.</text>
</comment>
<comment type="pathway">
    <text evidence="1">Carbohydrate degradation; glycolysis; D-glyceraldehyde 3-phosphate and glycerone phosphate from D-glucose: step 1/4.</text>
</comment>
<comment type="subunit">
    <text evidence="2 5 11 15">Monomer (PubMed:10686099). Interacts with RABL2/RABL2A; binds preferentially to GTP-bound RABL2 (By similarity). Interacts with VDAC1 (PubMed:22304920). The HK1-VDAC1 complex interacts with ATF2 (PubMed:22304920). Interacts (via N-terminal spermatogenic cell-specific region) with PFKM (via C-terminus) (By similarity). Interacts with SMAD5 (PubMed:28675158).</text>
</comment>
<comment type="interaction">
    <interactant intactId="EBI-713162">
        <id>P19367</id>
    </interactant>
    <interactant intactId="EBI-349854">
        <id>P13569</id>
        <label>CFTR</label>
    </interactant>
    <organismsDiffer>false</organismsDiffer>
    <experiments>5</experiments>
</comment>
<comment type="interaction">
    <interactant intactId="EBI-713162">
        <id>P19367</id>
    </interactant>
    <interactant intactId="EBI-621482">
        <id>P12931</id>
        <label>SRC</label>
    </interactant>
    <organismsDiffer>false</organismsDiffer>
    <experiments>2</experiments>
</comment>
<comment type="interaction">
    <interactant intactId="EBI-713162">
        <id>P19367</id>
    </interactant>
    <interactant intactId="EBI-354158">
        <id>P21796</id>
        <label>VDAC1</label>
    </interactant>
    <organismsDiffer>false</organismsDiffer>
    <experiments>3</experiments>
</comment>
<comment type="interaction">
    <interactant intactId="EBI-713162">
        <id>P19367</id>
    </interactant>
    <interactant intactId="EBI-298680">
        <id>P05480</id>
        <label>Src</label>
    </interactant>
    <organismsDiffer>true</organismsDiffer>
    <experiments>8</experiments>
</comment>
<comment type="subcellular location">
    <subcellularLocation>
        <location evidence="10 14">Mitochondrion outer membrane</location>
        <topology evidence="27">Peripheral membrane protein</topology>
    </subcellularLocation>
    <subcellularLocation>
        <location evidence="14">Cytoplasm</location>
        <location evidence="14">Cytosol</location>
    </subcellularLocation>
    <text evidence="14 29">The mitochondrial-binding peptide (MBP) region promotes association with the mitochondrial outer membrane (Probable). Dissociates from the mitochondrial outer membrane following inhibition by N-acetyl-D-glucosamine, leading to relocation to the cytosol (PubMed:27374331).</text>
</comment>
<comment type="alternative products">
    <event type="alternative splicing"/>
    <isoform>
        <id>P19367-1</id>
        <name>1</name>
        <name>Common</name>
        <sequence type="displayed"/>
    </isoform>
    <isoform>
        <id>P19367-2</id>
        <name>2</name>
        <name>Erythrocyte</name>
        <name>R</name>
        <sequence type="described" ref="VSP_002071"/>
    </isoform>
    <isoform>
        <id>P19367-3</id>
        <name>3</name>
        <name>TA</name>
        <name>TB</name>
        <sequence type="described" ref="VSP_002072"/>
    </isoform>
    <isoform>
        <id>P19367-4</id>
        <name>4</name>
        <name>TD</name>
        <sequence type="described" ref="VSP_002073"/>
    </isoform>
</comment>
<comment type="tissue specificity">
    <text evidence="6 22">Isoform 2: Erythrocyte specific (Ref.6). Isoform 3: Testis-specific (PubMed:10978502). Isoform 4: Testis-specific (PubMed:10978502).</text>
</comment>
<comment type="domain">
    <text evidence="4 20 21">The N- and C-terminal halves of this hexokinase contain a hexokinase domain (PubMed:10574795, PubMed:9493266, PubMed:9735292). The catalytic activity is associated with the C-terminus while regulatory function is associated with the N-terminus (PubMed:10574795, PubMed:9493266, PubMed:9735292). Each domain can bind a single D-glucose and D-glucose 6-phosphate molecule (PubMed:9493266).</text>
</comment>
<comment type="disease" evidence="7 19">
    <disease id="DI-01739">
        <name>Anemia, congenital, non-spherocytic hemolytic, 5</name>
        <acronym>CNSHA5</acronym>
        <description>An autosomal recessive disorder characterized by hemolytic anemia as the predominant clinical feature, and decreased red cell hexokinase activity.</description>
        <dbReference type="MIM" id="235700"/>
    </disease>
    <text>The disease is caused by variants affecting the gene represented in this entry.</text>
</comment>
<comment type="disease" evidence="9 18">
    <disease id="DI-03795">
        <name>Neuropathy, hereditary motor and sensory, Russe type</name>
        <acronym>HMSNR</acronym>
        <description>An autosomal recessive progressive complex peripheral neuropathy characterized by onset in the first decade of distal lower limb weakness and muscle atrophy resulting in walking difficulties. Distal impairment of the upper limbs usually occurs later, as does proximal lower limb weakness. There is distal sensory impairment, with pes cavus and areflexia. Laboratory studies suggest that it is a myelinopathy resulting in reduced nerve conduction velocities in the demyelinating range as well as a length-dependent axonopathy.</description>
        <dbReference type="MIM" id="605285"/>
    </disease>
    <text>The disease is caused by variants affecting the gene represented in this entry.</text>
</comment>
<comment type="disease" evidence="12 13">
    <disease id="DI-04983">
        <name>Retinitis pigmentosa 79</name>
        <acronym>RP79</acronym>
        <description>A form of retinitis pigmentosa, a retinal dystrophy belonging to the group of pigmentary retinopathies. Retinitis pigmentosa is characterized by retinal pigment deposits visible on fundus examination and primary loss of rod photoreceptor cells followed by secondary loss of cone photoreceptors. Patients typically have night vision blindness and loss of midperipheral visual field. As their condition progresses, they lose their far peripheral visual field and eventually central vision as well. RP79 inheritance is autosomal dominant.</description>
        <dbReference type="MIM" id="617460"/>
    </disease>
    <text>The disease is caused by variants affecting the gene represented in this entry.</text>
</comment>
<comment type="disease" evidence="16">
    <disease id="DI-05639">
        <name>Neurodevelopmental disorder with visual defects and brain anomalies</name>
        <acronym>NEDVIBA</acronym>
        <description>A disorder characterized by global developmental delay, speech delay, intellectual disability, structural brain abnormalities, and visual impairments including retinitis pigmentosa and optic atrophy.</description>
        <dbReference type="MIM" id="618547"/>
    </disease>
    <text>The disease is caused by variants affecting the gene represented in this entry.</text>
</comment>
<comment type="similarity">
    <text evidence="3 27">Belongs to the hexokinase family.</text>
</comment>
<comment type="caution">
    <text evidence="4 5 20">Hexokinase is known to act as a monomer (PubMed:10686099). It however homodimerizes at elevated protein concentrations used for crystallizations (PubMed:10574795, PubMed:9493266).</text>
</comment>
<comment type="online information" name="Wikipedia">
    <link uri="https://en.wikipedia.org/wiki/Hexokinase"/>
    <text>Hexokinase entry</text>
</comment>
<protein>
    <recommendedName>
        <fullName evidence="27">Hexokinase-1</fullName>
        <ecNumber evidence="8">2.7.1.1</ecNumber>
    </recommendedName>
    <alternativeName>
        <fullName evidence="25">Brain form hexokinase</fullName>
    </alternativeName>
    <alternativeName>
        <fullName evidence="26">Hexokinase type I</fullName>
        <shortName evidence="26">HK I</shortName>
    </alternativeName>
    <alternativeName>
        <fullName evidence="1">Hexokinase-A</fullName>
    </alternativeName>
</protein>